<name>POLN_SFV</name>
<organismHost>
    <name type="scientific">Aedes</name>
    <dbReference type="NCBI Taxonomy" id="7158"/>
</organismHost>
<organismHost>
    <name type="scientific">Atelerix albiventris</name>
    <name type="common">Middle-African hedgehog</name>
    <name type="synonym">Four-toed hedgehog</name>
    <dbReference type="NCBI Taxonomy" id="9368"/>
</organismHost>
<organismHost>
    <name type="scientific">Culex tritaeniorhynchus</name>
    <name type="common">Mosquito</name>
    <dbReference type="NCBI Taxonomy" id="7178"/>
</organismHost>
<organismHost>
    <name type="scientific">Halcyon</name>
    <dbReference type="NCBI Taxonomy" id="170865"/>
</organismHost>
<organismHost>
    <name type="scientific">Homo sapiens</name>
    <name type="common">Human</name>
    <dbReference type="NCBI Taxonomy" id="9606"/>
</organismHost>
<organismHost>
    <name type="scientific">Quelea</name>
    <dbReference type="NCBI Taxonomy" id="158617"/>
</organismHost>
<organismHost>
    <name type="scientific">Rhipicephalus</name>
    <dbReference type="NCBI Taxonomy" id="34630"/>
</organismHost>
<feature type="chain" id="PRO_0000308403" description="Polyprotein P1234">
    <location>
        <begin position="1"/>
        <end position="2432"/>
    </location>
</feature>
<feature type="chain" id="PRO_0000227770" description="Polyprotein P123'">
    <location>
        <begin position="1"/>
        <end position="1818"/>
    </location>
</feature>
<feature type="chain" id="PRO_0000446657" description="Polyprotein P123">
    <location>
        <begin position="1"/>
        <end position="1811"/>
    </location>
</feature>
<feature type="chain" id="PRO_0000041228" description="mRNA-capping enzyme nsP1">
    <location>
        <begin position="1"/>
        <end position="537"/>
    </location>
</feature>
<feature type="chain" id="PRO_0000041229" description="Protease nsP2">
    <location>
        <begin position="538"/>
        <end position="1336"/>
    </location>
</feature>
<feature type="chain" id="PRO_0000041230" description="Non-structural protein 3'">
    <location>
        <begin position="1337"/>
        <end position="1818"/>
    </location>
</feature>
<feature type="chain" id="PRO_0000446658" description="Non-structural protein 3">
    <location>
        <begin position="1337"/>
        <end position="1811"/>
    </location>
</feature>
<feature type="chain" id="PRO_0000041231" description="RNA-directed RNA polymerase nsP4">
    <location>
        <begin position="1819"/>
        <end position="2431"/>
    </location>
</feature>
<feature type="domain" description="Alphavirus-like MT" evidence="9">
    <location>
        <begin position="29"/>
        <end position="260"/>
    </location>
</feature>
<feature type="domain" description="(+)RNA virus helicase ATP-binding" evidence="8">
    <location>
        <begin position="692"/>
        <end position="844"/>
    </location>
</feature>
<feature type="domain" description="(+)RNA virus helicase C-terminal" evidence="8">
    <location>
        <begin position="845"/>
        <end position="993"/>
    </location>
</feature>
<feature type="domain" description="Peptidase C9" evidence="7">
    <location>
        <begin position="1006"/>
        <end position="1329"/>
    </location>
</feature>
<feature type="domain" description="Macro" evidence="5">
    <location>
        <begin position="1337"/>
        <end position="1495"/>
    </location>
</feature>
<feature type="domain" description="RdRp catalytic" evidence="6">
    <location>
        <begin position="2182"/>
        <end position="2297"/>
    </location>
</feature>
<feature type="region of interest" description="NsP1 membrane-binding" evidence="22">
    <location>
        <begin position="245"/>
        <end position="264"/>
    </location>
</feature>
<feature type="region of interest" description="Nucleolus localization signal" evidence="18">
    <location>
        <begin position="1007"/>
        <end position="1026"/>
    </location>
</feature>
<feature type="region of interest" description="Disordered" evidence="10">
    <location>
        <begin position="1759"/>
        <end position="1779"/>
    </location>
</feature>
<feature type="short sequence motif" description="Nuclear export signal" evidence="3">
    <location>
        <begin position="1060"/>
        <end position="1069"/>
    </location>
</feature>
<feature type="short sequence motif" description="Nuclear localization signal" evidence="25 38">
    <location>
        <begin position="1184"/>
        <end position="1188"/>
    </location>
</feature>
<feature type="short sequence motif" description="FGDF; binding to host G3BP1" evidence="30 48">
    <location>
        <begin position="1787"/>
        <end position="1790"/>
    </location>
</feature>
<feature type="short sequence motif" description="FGDF; binding to host G3BP1" evidence="30 48">
    <location>
        <begin position="1804"/>
        <end position="1807"/>
    </location>
</feature>
<feature type="compositionally biased region" description="Pro residues" evidence="10">
    <location>
        <begin position="1765"/>
        <end position="1774"/>
    </location>
</feature>
<feature type="active site" description="For cysteine protease nsP2 activity" evidence="7">
    <location>
        <position position="1015"/>
    </location>
</feature>
<feature type="active site" description="For cysteine protease nsP2 activity" evidence="7">
    <location>
        <position position="1085"/>
    </location>
</feature>
<feature type="binding site" evidence="8">
    <location>
        <begin position="723"/>
        <end position="730"/>
    </location>
    <ligand>
        <name>a ribonucleoside 5'-triphosphate</name>
        <dbReference type="ChEBI" id="CHEBI:61557"/>
    </ligand>
</feature>
<feature type="binding site" evidence="4">
    <location>
        <position position="1346"/>
    </location>
    <ligand>
        <name>ADP-D-ribose</name>
        <dbReference type="ChEBI" id="CHEBI:57967"/>
    </ligand>
</feature>
<feature type="binding site" evidence="4">
    <location>
        <position position="1360"/>
    </location>
    <ligand>
        <name>ADP-D-ribose</name>
        <dbReference type="ChEBI" id="CHEBI:57967"/>
    </ligand>
</feature>
<feature type="binding site" evidence="4">
    <location>
        <position position="1368"/>
    </location>
    <ligand>
        <name>ADP-D-ribose</name>
        <dbReference type="ChEBI" id="CHEBI:57967"/>
    </ligand>
</feature>
<feature type="binding site" evidence="4">
    <location>
        <position position="1448"/>
    </location>
    <ligand>
        <name>ADP-D-ribose</name>
        <dbReference type="ChEBI" id="CHEBI:57967"/>
    </ligand>
</feature>
<feature type="binding site" evidence="4">
    <location>
        <position position="1449"/>
    </location>
    <ligand>
        <name>ADP-D-ribose</name>
        <dbReference type="ChEBI" id="CHEBI:57967"/>
    </ligand>
</feature>
<feature type="binding site" evidence="4">
    <location>
        <position position="1450"/>
    </location>
    <ligand>
        <name>ADP-D-ribose</name>
        <dbReference type="ChEBI" id="CHEBI:57967"/>
    </ligand>
</feature>
<feature type="binding site" evidence="2">
    <location>
        <position position="1598"/>
    </location>
    <ligand>
        <name>Zn(2+)</name>
        <dbReference type="ChEBI" id="CHEBI:29105"/>
    </ligand>
</feature>
<feature type="binding site" evidence="2">
    <location>
        <position position="1600"/>
    </location>
    <ligand>
        <name>Zn(2+)</name>
        <dbReference type="ChEBI" id="CHEBI:29105"/>
    </ligand>
</feature>
<feature type="binding site" evidence="2">
    <location>
        <position position="1623"/>
    </location>
    <ligand>
        <name>Zn(2+)</name>
        <dbReference type="ChEBI" id="CHEBI:29105"/>
    </ligand>
</feature>
<feature type="binding site" evidence="2">
    <location>
        <position position="1641"/>
    </location>
    <ligand>
        <name>Zn(2+)</name>
        <dbReference type="ChEBI" id="CHEBI:29105"/>
    </ligand>
</feature>
<feature type="site" description="Involved in the phosphoramide link with 7-methyl-GMP" evidence="3">
    <location>
        <position position="38"/>
    </location>
</feature>
<feature type="site" description="Cleavage; by protease nsP2" evidence="2">
    <location>
        <begin position="537"/>
        <end position="538"/>
    </location>
</feature>
<feature type="site" description="Cleavage; by protease nsP2" evidence="2">
    <location>
        <begin position="1336"/>
        <end position="1337"/>
    </location>
</feature>
<feature type="site" description="Cleavage; by protease nsP2" evidence="4">
    <location>
        <begin position="1818"/>
        <end position="1819"/>
    </location>
</feature>
<feature type="modified residue" description="Phosphothreonine; by host" evidence="14">
    <location>
        <position position="1680"/>
    </location>
</feature>
<feature type="modified residue" description="Phosphothreonine; by host" evidence="14">
    <location>
        <position position="1681"/>
    </location>
</feature>
<feature type="lipid moiety-binding region" description="S-palmitoyl cysteine; by host" evidence="13 39">
    <location>
        <position position="418"/>
    </location>
</feature>
<feature type="lipid moiety-binding region" description="S-palmitoyl cysteine; by host" evidence="13 39">
    <location>
        <position position="420"/>
    </location>
</feature>
<feature type="sequence variant" description="In strain: Isolate L10.">
    <original>H</original>
    <variation>Y</variation>
    <location>
        <position position="6"/>
    </location>
</feature>
<feature type="sequence variant" description="In strain: Isolate Garoff/Takkinen.">
    <original>VC</original>
    <variation>DS</variation>
    <location>
        <begin position="95"/>
        <end position="96"/>
    </location>
</feature>
<feature type="sequence variant" description="In strain: Isolate Ts14.">
    <original>D</original>
    <variation>N</variation>
    <location>
        <position position="119"/>
    </location>
</feature>
<feature type="sequence variant" description="In strain: Isolate L10.">
    <original>E</original>
    <variation>K</variation>
    <location>
        <position position="311"/>
    </location>
</feature>
<feature type="sequence variant" description="In strain: Isolate Me Tri virus." evidence="26">
    <original>R</original>
    <variation>K</variation>
    <location>
        <position position="427"/>
    </location>
</feature>
<feature type="sequence variant" description="In strain: Isolate Me Tri virus." evidence="26">
    <original>K</original>
    <variation>E</variation>
    <location>
        <position position="470"/>
    </location>
</feature>
<feature type="sequence variant" description="In strain: Isolate Me Tri virus." evidence="26">
    <original>I</original>
    <variation>M</variation>
    <location>
        <position position="482"/>
    </location>
</feature>
<feature type="sequence variant" description="In strain: Isolate Ts10.">
    <original>E</original>
    <variation>D</variation>
    <location>
        <position position="529"/>
    </location>
</feature>
<feature type="sequence variant" description="In strain: Isolate Garoff/Takkinen.">
    <original>R</original>
    <variation>G</variation>
    <location>
        <position position="596"/>
    </location>
</feature>
<feature type="sequence variant" description="In strain: Isolate Me Tri virus." evidence="26">
    <original>H</original>
    <variation>Y</variation>
    <location>
        <position position="761"/>
    </location>
</feature>
<feature type="sequence variant" description="In strain: Isolate Garoff/Takkinen.">
    <original>LDIQAKTV</original>
    <variation>KGTSRENS</variation>
    <location>
        <begin position="764"/>
        <end position="771"/>
    </location>
</feature>
<feature type="sequence variant" description="In strain: Isolate L10.">
    <original>LDIQAKTV</original>
    <variation>NWTSRKNS</variation>
    <location>
        <begin position="764"/>
        <end position="771"/>
    </location>
</feature>
<feature type="sequence variant" description="In strain: Isolate L10.">
    <original>D</original>
    <variation>N</variation>
    <location>
        <position position="817"/>
    </location>
</feature>
<feature type="sequence variant" description="In strain: Isolate L10.">
    <original>M</original>
    <variation>T</variation>
    <location>
        <position position="826"/>
    </location>
</feature>
<feature type="sequence variant" description="In strain: Isolate L10.">
    <original>H</original>
    <variation>N</variation>
    <location>
        <position position="843"/>
    </location>
</feature>
<feature type="sequence variant" description="In strain: Isolate Ts1.">
    <original>S</original>
    <variation>N</variation>
    <location>
        <position position="845"/>
    </location>
</feature>
<feature type="sequence variant" description="In strain: Isolate L10.">
    <original>S</original>
    <variation>C</variation>
    <location>
        <position position="859"/>
    </location>
</feature>
<feature type="sequence variant" description="In strain: Isolate Ts13.">
    <original>T</original>
    <variation>S</variation>
    <location>
        <position position="869"/>
    </location>
</feature>
<feature type="sequence variant" description="In strain: Isolate Garoff/Takkinen.">
    <original>V</original>
    <variation>A</variation>
    <location>
        <position position="901"/>
    </location>
</feature>
<feature type="sequence variant" description="In strain: Isolate Me Tri virus." evidence="26">
    <original>T</original>
    <variation>M</variation>
    <location>
        <position position="981"/>
    </location>
</feature>
<feature type="sequence variant" description="In strain: Isolate Me Tri virus." evidence="26">
    <original>V</original>
    <variation>E</variation>
    <location>
        <position position="1052"/>
    </location>
</feature>
<feature type="sequence variant" description="In strain: Isolate Ts11.">
    <original>G</original>
    <variation>R</variation>
    <location>
        <position position="1114"/>
    </location>
</feature>
<feature type="sequence variant" description="In strain: Isolate Ts6.">
    <original>A</original>
    <variation>T</variation>
    <location>
        <position position="1199"/>
    </location>
</feature>
<feature type="sequence variant" description="In strain: Isolate Garoff/Takkinen and Isolate L10.">
    <original>SL</original>
    <variation>I</variation>
    <location>
        <begin position="1258"/>
        <end position="1259"/>
    </location>
</feature>
<feature type="sequence variant" description="In strain: Isolate L10 clone SFV4.">
    <original>A</original>
    <variation>E</variation>
    <location>
        <position position="1384"/>
    </location>
</feature>
<feature type="sequence variant" description="In strain: Isolate Me Tri virus." evidence="26">
    <original>A</original>
    <variation>G</variation>
    <location>
        <position position="1406"/>
    </location>
</feature>
<feature type="sequence variant" description="In strain: Isolate Garoff/Takkinen.">
    <original>Q</original>
    <variation>R</variation>
    <location>
        <position position="1565"/>
    </location>
</feature>
<feature type="sequence variant" description="In strain: Isolate Garoff/Takkinen.">
    <original>R</original>
    <variation>G</variation>
    <location>
        <position position="1579"/>
    </location>
</feature>
<feature type="sequence variant" description="In strain: Isolate Garoff/Takkinen, Isolate L10 and Isolate L10 clone SFV4.">
    <original>G</original>
    <variation>V</variation>
    <location>
        <position position="1644"/>
    </location>
</feature>
<feature type="sequence variant" description="In strain: Isolate Garoff/Takkinen.">
    <original>E</original>
    <variation>Q</variation>
    <location>
        <position position="1849"/>
    </location>
</feature>
<feature type="sequence variant" description="In strain: Isolate L10.">
    <original>P</original>
    <variation>R</variation>
    <location>
        <position position="1921"/>
    </location>
</feature>
<feature type="sequence variant" description="In strain: Isolate L10.">
    <original>V</original>
    <variation>A</variation>
    <location>
        <position position="1938"/>
    </location>
</feature>
<feature type="sequence variant" description="In strain: Isolate Ts13.">
    <original>A</original>
    <variation>V</variation>
    <location>
        <position position="2060"/>
    </location>
</feature>
<feature type="sequence variant" description="In strain: Isolate L10.">
    <original>A</original>
    <variation>D</variation>
    <location>
        <position position="2088"/>
    </location>
</feature>
<feature type="sequence variant" description="In strain: Isolate Garoff/Takkinen.">
    <original>A</original>
    <variation>T</variation>
    <location>
        <position position="2405"/>
    </location>
</feature>
<feature type="mutagenesis site" description="Complete loss of guanylyltransferase and guanine-7-methyl transferase activity in vitro." evidence="40">
    <original>L</original>
    <variation>E</variation>
    <location>
        <position position="19"/>
    </location>
</feature>
<feature type="mutagenesis site" description="Complete loss of guanylyltransferase and guanine-7-methyl transferase activity in vitro." evidence="40">
    <original>H</original>
    <variation>A</variation>
    <location>
        <position position="38"/>
    </location>
</feature>
<feature type="mutagenesis site" description="60% increase of guanine-7-methyl transferase activity in vitro. Complete loss of guanylyltransferase activity in vitro." evidence="40">
    <original>D</original>
    <variation>A</variation>
    <location>
        <position position="64"/>
    </location>
</feature>
<feature type="mutagenesis site" description="60% loss of guanine-7-methyl transferase activity and complete loss of guanylyltransferase activity in vitro." evidence="40">
    <original>CVC</original>
    <variation>AVA</variation>
    <location>
        <begin position="81"/>
        <end position="83"/>
    </location>
</feature>
<feature type="mutagenesis site" description="Complete loss of guanylyltransferase and guanine-7-methyl transferase activity in vitro." evidence="40">
    <original>D</original>
    <variation>A</variation>
    <location>
        <position position="90"/>
    </location>
</feature>
<feature type="mutagenesis site" description="Complete loss of guanylyltransferase and guanine-7-methyl transferase activity in vitro." evidence="40">
    <original>R</original>
    <variation>A</variation>
    <location>
        <position position="93"/>
    </location>
</feature>
<feature type="mutagenesis site" description="90% loss of guanine-7-methyl transferase activity and complete loss of guanylyltransferase activity in vitro." evidence="40">
    <original>C</original>
    <variation>A</variation>
    <location>
        <position position="135"/>
    </location>
</feature>
<feature type="mutagenesis site" description="Complete loss of guanylyltransferase and guanine-7-methyl transferase activity in vitro." evidence="40">
    <original>C</original>
    <variation>A</variation>
    <location>
        <position position="142"/>
    </location>
</feature>
<feature type="mutagenesis site" description="No effect on guanylyltransferase and guanine-7-methyl transferase activity in vitro." evidence="40">
    <original>D</original>
    <variation>A</variation>
    <location>
        <position position="153"/>
    </location>
</feature>
<feature type="mutagenesis site" description="50% loss of guanine-7-methyl transferase activity and no effect on guanylyltransferase activity in vitro." evidence="40">
    <original>K</original>
    <variation>A</variation>
    <location>
        <position position="169"/>
    </location>
</feature>
<feature type="mutagenesis site" description="No effect on guanine-7-methyl transferase activity in vitro." evidence="40">
    <original>D</original>
    <variation>A</variation>
    <location>
        <position position="180"/>
    </location>
</feature>
<feature type="mutagenesis site" description="No effect on guanylyltransferase and guanine-7-methyl transferase activity in vitro." evidence="40">
    <original>E</original>
    <variation>A</variation>
    <location>
        <position position="203"/>
    </location>
</feature>
<feature type="mutagenesis site" description="90% loss of guanylyltransferase and guanine-7-methyl transferase activity in vitro." evidence="40">
    <original>C</original>
    <variation>A</variation>
    <location>
        <position position="214"/>
    </location>
</feature>
<feature type="mutagenesis site" description="97% loss of guanine-7-methyl transferase activity and complete loss of guanylyltransferase activity in vitro." evidence="40">
    <original>Y</original>
    <variation>A</variation>
    <location>
        <position position="249"/>
    </location>
</feature>
<feature type="mutagenesis site" description="Nsp1 accumulates in the cytoplasm and is poorly palmitoylated." evidence="22">
    <original>R</original>
    <variation>A</variation>
    <location>
        <position position="253"/>
    </location>
</feature>
<feature type="mutagenesis site" description="Nsp1 accumulates in the cytoplasm and is poorly palmitoylated." evidence="22">
    <original>W</original>
    <variation>A</variation>
    <location>
        <position position="259"/>
    </location>
</feature>
<feature type="mutagenesis site" description="95% loss of guanine-7-methyl transferase activity and 98% loss of guanylyltransferase activity in vitro." evidence="40">
    <original>K</original>
    <variation>A</variation>
    <location>
        <position position="317"/>
    </location>
</feature>
<feature type="mutagenesis site" description="Complete loss of palmitoylation. Complete loss of pathogenicity in mice." evidence="13 39">
    <original>CCC</original>
    <variation>AAA</variation>
    <location>
        <begin position="418"/>
        <end position="420"/>
    </location>
</feature>
<feature type="mutagenesis site" description="Complete loss of NTPase and helicase activity." evidence="11 12 37 38">
    <original>K</original>
    <variation>N</variation>
    <location>
        <position position="729"/>
    </location>
</feature>
<feature type="mutagenesis site" description="Complete loss of polyprotein processing." evidence="15">
    <original>C</original>
    <variation>A</variation>
    <location>
        <position position="1015"/>
    </location>
</feature>
<feature type="mutagenesis site" description="Complete loss of nuclear localization for nsP2." evidence="38">
    <original>R</original>
    <variation>D</variation>
    <location>
        <position position="1186"/>
    </location>
</feature>
<feature type="mutagenesis site" description="Complete loss of threonine phosphorylation." evidence="14">
    <original>T</original>
    <variation>A</variation>
    <location>
        <position position="1680"/>
    </location>
</feature>
<feature type="mutagenesis site" description="Complete loss of threonine phosphorylation." evidence="14">
    <original>T</original>
    <variation>A</variation>
    <location>
        <position position="1681"/>
    </location>
</feature>
<feature type="mutagenesis site" description="Weak interaction with host G3BP1." evidence="30">
    <original>T</original>
    <variation>A</variation>
    <location>
        <position position="1786"/>
    </location>
</feature>
<feature type="mutagenesis site" description="Complete loss of interaction with host G3BP1." evidence="30">
    <original>F</original>
    <variation>A</variation>
    <location>
        <position position="1787"/>
    </location>
</feature>
<feature type="mutagenesis site" description="Complete loss of interaction with host G3BP1." evidence="30">
    <original>G</original>
    <variation>A</variation>
    <location>
        <position position="1788"/>
    </location>
</feature>
<feature type="mutagenesis site" description="Complete loss of interaction with host G3BP1." evidence="30">
    <original>D</original>
    <variation>A</variation>
    <location>
        <position position="1789"/>
    </location>
</feature>
<feature type="mutagenesis site" description="Complete loss of interaction with host G3BP1." evidence="30">
    <original>F</original>
    <variation>A</variation>
    <location>
        <position position="1790"/>
    </location>
</feature>
<feature type="mutagenesis site" description="No loss of interaction with host G3BP1." evidence="30">
    <original>D</original>
    <variation>A</variation>
    <location>
        <position position="1791"/>
    </location>
</feature>
<feature type="mutagenesis site" description="Weak interaction with host G3BP1." evidence="30">
    <original>T</original>
    <variation>A</variation>
    <location>
        <position position="1803"/>
    </location>
</feature>
<feature type="mutagenesis site" description="Complete loss of interaction with host G3BP1." evidence="30">
    <original>F</original>
    <variation>A</variation>
    <location>
        <position position="1804"/>
    </location>
</feature>
<feature type="mutagenesis site" description="Complete loss of interaction with host G3BP1." evidence="30">
    <original>G</original>
    <variation>A</variation>
    <location>
        <position position="1805"/>
    </location>
</feature>
<feature type="mutagenesis site" description="Complete loss of interaction with host G3BP1." evidence="30">
    <original>D</original>
    <variation>A</variation>
    <location>
        <position position="1806"/>
    </location>
</feature>
<feature type="mutagenesis site" description="Complete loss of interaction with host G3BP1." evidence="30">
    <original>F</original>
    <variation>A</variation>
    <location>
        <position position="1807"/>
    </location>
</feature>
<feature type="mutagenesis site" description="No loss of interaction with host G3BP1." evidence="30">
    <original>D</original>
    <variation>A</variation>
    <location>
        <position position="1808"/>
    </location>
</feature>
<feature type="mutagenesis site" description="No effect on polyprotein processing." evidence="15">
    <original>D</original>
    <variation>A</variation>
    <location>
        <position position="1824"/>
    </location>
</feature>
<feature type="sequence conflict" description="In Ref. 5; ACB12687." evidence="42" ref="5">
    <original>F</original>
    <variation>L</variation>
    <location>
        <position position="1537"/>
    </location>
</feature>
<feature type="sequence conflict" description="In Ref. 5; ACB12687." evidence="42" ref="5">
    <original>T</original>
    <variation>S</variation>
    <location>
        <position position="1591"/>
    </location>
</feature>
<feature type="sequence conflict" description="In Ref. 5; ACB12687." evidence="42" ref="5">
    <original>G</original>
    <variation>V</variation>
    <location>
        <position position="1644"/>
    </location>
</feature>
<feature type="helix" evidence="56">
    <location>
        <begin position="246"/>
        <end position="259"/>
    </location>
</feature>
<feature type="strand" evidence="57">
    <location>
        <begin position="1786"/>
        <end position="1789"/>
    </location>
</feature>
<feature type="helix" evidence="58">
    <location>
        <begin position="1794"/>
        <end position="1799"/>
    </location>
</feature>
<sequence length="2432" mass="269512">MAAKVHVDIEADSPFIKSLQKAFPSFEVESLQVTPNDHANARAFSHLATKLIEQETDKDTLILDIGSAPSRRMMSTHKYHCVCPMRSAEDPERLVCYAKKLAAASGKVLDREIAGKITDLQTVMATPDAESPTFCLHTDVTCRTAAEVAVYQDVYAVHAPTSLYHQAMKGVRTAYWIGFDTTPFMFDALAGAYPTYATNWADEQVLQARNIGLCAASLTEGRLGKLSILRKKQLKPCDTVMFSVGSTLYTESRKLLRSWHLPSVFHLKGKQSFTCRCDTIVSCEGYVVKKITMCPGLYGKTVGYAVTYHAEGFLVCKTTDTVKGERVSFPVCTYVPSTICDQMTGILATDVTPEDAQKLLVGLNQRIVVNGRTQRNTNTMKNYLLPIVAVAFSKWAREYKADLDDEKPLGVRERSLTCCCLWAFKTRKMHTMYKKPDTQTIVKVPSEFNSFVIPSLWSTGLAIPVRSRIKMLLAKKTKRELIPVLDASSARDAEQEEKERLEAELTREALPPLVPIAPAETGVVDVDVEELEYHAGAGVVETPRSALKVTAQPNDVLLGNYVVLSPQTVLKSSKLAPVHPLAEQVKIITHNGRAGRYQVDGYDGRVLLPCGSAIPVPEFQALSESATMVYNEREFVNRKLYHIAVHGPSLNTDEENYEKVRAERTDAEYVFDVDKKCCVKREEASGLVLVGELTNPPFHEFAYEGLKIRPSAPYKTTVVGVFGVPGSGKSAIIKSLVTKHDLVTSGKKENCQEIVNDVKKHRGLDIQAKTVDSILLNGCRRAVDILYVDEAFACHSGTLLALIALVKPRSKVVLCGDPKQCGFFNMMQLKVNFNHNICTEVCHKSISRRCTRPVTAIVSTLHYGGKMRTTNPCNKPIIIDTTGQTKPKPGDIVLTCFRGWVKQLQLDYRGHEVMTAAASQGLTRKGVYAVRQKVNENPLYAPASEHVNVLLTRTEDRLVWKTLAGDPWIKVLSNIPQGNFTATLEEWQEEHDKIMKVIEGPAAPVDAFQNKANVCWAKSLVPVLDTAGIRLTAEEWSTIITAFKEDRAYSPVVALNEICTKYYGVDLDSGLFSAPKVSLYYENNHWDNRPGGRMYGFNAATAARLEARHTFLKGQWHTGKQAVIAERKIQPLSVLDNVIPINRRLPHALVAEYKTVKGSRVEWLVNKVRGYHVLLVSEYNLALPRRRVTWLSPLNVTGADRCYDLSLGLPADAGRFDLVFVNIHTEFRIHHYQQCVDHAMKLQMLGGDALRLLKPGGSLLMRAYGYADKISEAVVSSLSRKFSSARVLRPDCVTSNTEVFLLFSNFDNGKRPSTLHQMNTKLSAVYAGEAMHTAGCAPSYRVKRADIATCTEAAVVNAANARGTVGDGVCRAVAKKWPSAFKGAATPVGTIKTVMCGSYPVIHAVAPNFSATTEAEGDRELAAVYRAVAAEVNRLSLSSVAIPLLSTGVFSGGRDRLQQSLNHLFTAMDATDADVTIYCRDKSWEKKIQEAIDMRTAVELLNDDVELTTDLVRVHPDSSLVGRKGYSTTDGSLYSYFEGTKFNQAAIDMAEILTLWPRLQEANEQICLYALGETMDNIRSKCPVNDSDSSTPPRTVPCLCRYAMTAERIARLRSHQVKSMVVCSSFPLPKYHVDGVQKVKCEKGLLFDPTVPSVVSPRKYAASTTDHSDRSLRGFDLDWTTDSSSTASDTMSLPSLQSCDIDSIYEPMAPIVVTADVHPEPAGIADLAADVHPEPADHVDLENPIPPPRPKRAAYLASRAAERPVPAPRKPTPAPRTAFRNKLPLTFGDFDEHEVDALASGITFGDFDDVLRLGRAGAYIFSSDTGSGHLQQKSVRQHNLQCAQLDAVEEEKMYPPKLDTEREKLLLLKMQMHPSEANKSRYQSRKVENMKATVVDRLTSGARLYTGADVGRIPTYAVRYPRPVYSPTVIERFSSPDVAIAACNEYLSRNYPTVASYQITDEYDAYLDMVDGSDSCLDRATFCPAKLRCYPKHHAYHQPTVRSAVPSPFQNTLQNVLAAATKRNCNVTQMRELPTMDSAVFNVECFKRYACSGEYWEEYAKQPIRITTENITTYVTKLKGPKAAALFAKTHNLVPLQEVPMDRFTVDMKRDVKVTPGTKHTEERPKVQVIQAAEPLATAYLCGIHRELVRRLNAVLRPNVHTLFDMSAEDFDAIIASHFHPGDPVLETDIASFDKSQDDSLALTGLMILEDLGVDQYLLDLIEAAFGEISSCHLPTGTRFKFGAMMKSGMFLTLFINTVLNITIASRVLEQRLTDSACAAFIGDDNIVHGVISDKLMAERCASWVNMEVKIIDAVMGEKPPYFCGGFIVFDSVTQTACRVSDPLKRLFKLGKPLTAEDKQDEDRRRALSDEVSKWFRTGLGAELEVALTSRYEVEGCKSILIAMATLARDIKAFKKLRGPVIHLYGGPRLVR</sequence>
<organism>
    <name type="scientific">Semliki forest virus</name>
    <name type="common">SFV</name>
    <dbReference type="NCBI Taxonomy" id="11033"/>
    <lineage>
        <taxon>Viruses</taxon>
        <taxon>Riboviria</taxon>
        <taxon>Orthornavirae</taxon>
        <taxon>Kitrinoviricota</taxon>
        <taxon>Alsuviricetes</taxon>
        <taxon>Martellivirales</taxon>
        <taxon>Togaviridae</taxon>
        <taxon>Alphavirus</taxon>
    </lineage>
</organism>
<reference key="1">
    <citation type="journal article" date="1986" name="Nucleic Acids Res.">
        <title>Complete nucleotide sequence of the nonstructural protein genes of Semliki Forest virus.</title>
        <authorList>
            <person name="Takkinen K."/>
        </authorList>
    </citation>
    <scope>NUCLEOTIDE SEQUENCE [GENOMIC RNA]</scope>
    <source>
        <strain>Isolate Garoff/Takkinen</strain>
    </source>
</reference>
<reference key="2">
    <citation type="journal article" date="2000" name="J. Virol.">
        <title>Replicase complex genes of Semliki Forest virus confer lethal neurovirulence.</title>
        <authorList>
            <person name="Tuittila M.T."/>
            <person name="Santagati M.G."/>
            <person name="Roeyttae M."/>
            <person name="Maeaettae J.A."/>
            <person name="Hinkkanen A.E."/>
        </authorList>
    </citation>
    <scope>NUCLEOTIDE SEQUENCE [GENOMIC RNA]</scope>
    <source>
        <strain>Isolate L10 clone SFV4</strain>
    </source>
</reference>
<reference key="3">
    <citation type="submission" date="2002-05" db="EMBL/GenBank/DDBJ databases">
        <title>Semliki Forest virus -- L10 strain complete genome.</title>
        <authorList>
            <person name="Logue C."/>
            <person name="Mooney D."/>
            <person name="Shanley R."/>
            <person name="Atkins G.J."/>
        </authorList>
    </citation>
    <scope>NUCLEOTIDE SEQUENCE [GENOMIC RNA]</scope>
    <source>
        <strain>Isolate L10</strain>
    </source>
</reference>
<reference key="4">
    <citation type="journal article" date="2006" name="J. Virol.">
        <title>Identification of mutations causing temperature-sensitive defects in Semliki Forest virus RNA synthesis.</title>
        <authorList>
            <person name="Lulla V."/>
            <person name="Merits A."/>
            <person name="Sarin P."/>
            <person name="Kaariainen L."/>
            <person name="Keranen S."/>
            <person name="Ahola T."/>
        </authorList>
    </citation>
    <scope>NUCLEOTIDE SEQUENCE [GENOMIC RNA]</scope>
    <source>
        <strain>Isolate Ts1</strain>
        <strain>Isolate Ts10</strain>
        <strain>Isolate Ts11</strain>
        <strain>Isolate Ts13</strain>
        <strain>Isolate Ts14</strain>
        <strain>Isolate Ts6</strain>
        <strain>Isolate Ts9</strain>
    </source>
</reference>
<reference key="5">
    <citation type="journal article" date="2008" name="J. Gen. Virol.">
        <title>Me Tri virus: a Semliki Forest virus strain from Vietnam?</title>
        <authorList>
            <person name="Tan le V."/>
            <person name="Ha do Q."/>
            <person name="Hien V.M."/>
            <person name="van der Hoek L."/>
            <person name="Farrar J."/>
            <person name="de Jong M.D."/>
        </authorList>
    </citation>
    <scope>NUCLEOTIDE SEQUENCE [GENOMIC RNA] (POLYPROTEIN P123)</scope>
    <source>
        <strain>Isolate Me Tri virus</strain>
    </source>
</reference>
<reference key="6">
    <citation type="journal article" date="1988" name="J. Cell Biol.">
        <title>Alphavirus RNA replicase is located on the cytoplasmic surface of endosomes and lysosomes.</title>
        <authorList>
            <person name="Froshauer S."/>
            <person name="Kartenbeck J."/>
            <person name="Helenius A."/>
        </authorList>
    </citation>
    <scope>SUBCELLULAR LOCATION (RNA-DIRECTED RNA POLYMERASE NSP4)</scope>
</reference>
<reference key="7">
    <citation type="journal article" date="1992" name="Virology">
        <title>Nuclear and nucleolar targeting signals of Semliki Forest virus nonstructural protein nsP2.</title>
        <authorList>
            <person name="Rikkonen M."/>
            <person name="Peraenen J."/>
            <person name="Kaeaeriaeinen L."/>
        </authorList>
    </citation>
    <scope>SUBCELLULAR LOCATION (PROTEASE NSP2)</scope>
    <scope>NUCLEAR LOCALIZATION SIGNAL</scope>
</reference>
<reference key="8">
    <citation type="journal article" date="1994" name="J. Virol.">
        <title>ATPase and GTPase activities associated with Semliki Forest virus nonstructural protein nsP2.</title>
        <authorList>
            <person name="Rikkonen M."/>
            <person name="Peraenen J."/>
            <person name="Kaeaeriaeinen L."/>
        </authorList>
    </citation>
    <scope>FUNCTION (PROTEASE NSP2)</scope>
    <scope>CATALYTIC ACTIVITY (PROTEASE NSP2)</scope>
    <scope>MUTAGENESIS OF LYS-729</scope>
</reference>
<reference key="9">
    <citation type="journal article" date="1995" name="Virology">
        <title>The alphavirus replicase protein nsP1 is membrane-associated and has affinity to endocytic organelles.</title>
        <authorList>
            <person name="Peraenen J."/>
            <person name="Laakkonen P."/>
            <person name="Hyvoenen M."/>
            <person name="Kaeaeriaeinen L."/>
        </authorList>
    </citation>
    <scope>SUBCELLULAR LOCATION (MRNA-CAPPING ENZYME NSP1)</scope>
</reference>
<reference key="10">
    <citation type="journal article" date="1995" name="Proc. Natl. Acad. Sci. U.S.A.">
        <title>Reaction in alphavirus mRNA capping: formation of a covalent complex of nonstructural protein nsP1 with 7-methyl-GMP.</title>
        <authorList>
            <person name="Ahola T."/>
            <person name="Kaeaeriaeinen L."/>
        </authorList>
    </citation>
    <scope>FUNCTION (MRNA-CAPPING ENZYME NSP1)</scope>
</reference>
<reference key="11">
    <citation type="journal article" date="1996" name="J. Biol. Chem.">
        <title>The effects of palmitoylation on membrane association of Semliki forest virus RNA capping enzyme.</title>
        <authorList>
            <person name="Laakkonen P."/>
            <person name="Ahola T."/>
            <person name="Kaeaeriaeinen L."/>
        </authorList>
    </citation>
    <scope>PALMITOYLATION AT CYS-418 AND CYS-420</scope>
    <scope>MUTAGENESIS OF 418-CYS--CYS-420</scope>
    <scope>SUBCELLULAR LOCATION (MRNA-CAPPING ENZYME NSP1)</scope>
</reference>
<reference key="12">
    <citation type="journal article" date="1996" name="Virology">
        <title>Functional significance of the nuclear-targeting and NTP-binding motifs of Semliki Forest virus nonstructural protein nsP2.</title>
        <authorList>
            <person name="Rikkonen M."/>
        </authorList>
    </citation>
    <scope>SUBCELLULAR LOCATION (PROTEASE NSP2)</scope>
    <scope>MUTAGENESIS OF LYS-729 AND ARG-1186</scope>
    <scope>NUCLEAR LOCALIZATION SIGNAL</scope>
</reference>
<reference key="13">
    <citation type="journal article" date="1997" name="J. Virol.">
        <title>Critical residues of Semliki Forest virus RNA capping enzyme involved in methyltransferase and guanylyltransferase-like activities.</title>
        <authorList>
            <person name="Ahola T."/>
            <person name="Laakkonen P."/>
            <person name="Vihinen H."/>
            <person name="Kaeaeriaeinen L."/>
        </authorList>
    </citation>
    <scope>FUNCTION (MRNA-CAPPING ENZYME NSP1)</scope>
    <scope>MUTAGENESIS OF LEU-19; HIS-38; ASP-64; 81-CYS--CYS-83; ASP-90; ARG-93; CYS-135; CYS-142; ASP-153; LYS-169; ASP-180; GLU-203; CYS-214; TYR-249 AND LYS-317</scope>
</reference>
<reference key="14">
    <citation type="journal article" date="1998" name="J. Virol.">
        <title>Alphavirus replicase protein NSP1 induces filopodia and rearrangement of actin filaments.</title>
        <authorList>
            <person name="Laakkonen P."/>
            <person name="Auvinen P."/>
            <person name="Kujala P."/>
            <person name="Kaeaeriaeinen L."/>
        </authorList>
    </citation>
    <scope>FUNCTION (MRNA-CAPPING ENZYME NSP1)</scope>
</reference>
<reference key="15">
    <citation type="journal article" date="1999" name="EMBO J.">
        <title>Semliki Forest virus mRNA capping enzyme requires association with anionic membrane phospholipids for activity.</title>
        <authorList>
            <person name="Ahola T."/>
            <person name="Lampio A."/>
            <person name="Auvinen P."/>
            <person name="Kaeaeriaeinen L."/>
        </authorList>
    </citation>
    <scope>MEMBRANE-BINDING (MRNA-CAPPING ENZYME NSP1)</scope>
</reference>
<reference key="16">
    <citation type="journal article" date="1999" name="FEBS Lett.">
        <title>RNA helicase activity of Semliki Forest virus replicase protein NSP2.</title>
        <authorList>
            <person name="Gomez de Cedron M."/>
            <person name="Ehsani N."/>
            <person name="Mikkola M.L."/>
            <person name="Garcia J.A."/>
            <person name="Kaeaeriaeinen L."/>
        </authorList>
    </citation>
    <scope>FUNCTION (PROTEASE NSP2)</scope>
    <scope>MUTAGENESIS OF LYS-729</scope>
</reference>
<reference key="17">
    <citation type="journal article" date="2000" name="J. Virol.">
        <title>Effects of palmitoylation of replicase protein nsP1 on alphavirus infection.</title>
        <authorList>
            <person name="Ahola T."/>
            <person name="Kujala P."/>
            <person name="Tuittila M."/>
            <person name="Blom T."/>
            <person name="Laakkonen P."/>
            <person name="Hinkkanen A."/>
            <person name="Auvinen P."/>
        </authorList>
    </citation>
    <scope>PALMITOYLATION AT CYS-418 AND CYS-420</scope>
    <scope>MUTAGENESIS OF 418-CYS--CYS-420</scope>
</reference>
<reference key="18">
    <citation type="journal article" date="2000" name="J. Biol. Chem.">
        <title>Identification of a novel function of the alphavirus capping apparatus. RNA 5'-triphosphatase activity of Nsp2.</title>
        <authorList>
            <person name="Vasiljeva L."/>
            <person name="Merits A."/>
            <person name="Auvinen P."/>
            <person name="Kaeaeriaeinen L."/>
        </authorList>
    </citation>
    <scope>FUNCTION (PROTEASE NSP2)</scope>
    <scope>BIOPHYSICOCHEMICAL PROPERTIES (PROTEASE NSP2)</scope>
    <scope>CATALYTIC ACTIVITY (PROTEASE NSP2)</scope>
    <scope>MUTAGENESIS OF LYS-729</scope>
</reference>
<reference key="19">
    <citation type="journal article" date="2001" name="J. Gen. Virol.">
        <title>Proteolytic processing of Semliki Forest virus-specific non-structural polyprotein by nsP2 protease.</title>
        <authorList>
            <person name="Merits A."/>
            <person name="Vasiljeva L."/>
            <person name="Ahola T."/>
            <person name="Kaeaeriaeinen L."/>
            <person name="Auvinen P."/>
        </authorList>
    </citation>
    <scope>ACTIVE SITE (PROTEASE NSP2)</scope>
    <scope>MUTAGENESIS OF CYS-1015 AND ASP-1824</scope>
    <scope>FUNCTION (PROTEASE NSP2)</scope>
    <scope>PROTEOLYTIC CLEAVAGE (POLYPROTEIN P1234)</scope>
    <scope>PROTEOLYTIC CLEAVAGE (POLYPROTEIN P123)</scope>
</reference>
<reference key="20">
    <citation type="journal article" date="2001" name="J. Biol. Chem.">
        <title>Site-specific protease activity of the carboxyl-terminal domain of Semliki Forest virus replicase protein nsP2.</title>
        <authorList>
            <person name="Vasiljeva L."/>
            <person name="Valmu L."/>
            <person name="Kaeaeriaeinen L."/>
            <person name="Merits A."/>
        </authorList>
    </citation>
    <scope>FUNCTION (PROTEASE NSP2)</scope>
    <scope>PROTEOLYTIC CLEAVAGE (POLYPROTEIN P1234)</scope>
    <scope>ACTIVITY REGULATION (PROTEASE NSP2)</scope>
</reference>
<reference key="21">
    <citation type="journal article" date="2001" name="J. Biol. Chem.">
        <title>Elimination of phosphorylation sites of Semliki Forest virus replicase protein nsP3.</title>
        <authorList>
            <person name="Vihinen H."/>
            <person name="Ahola T."/>
            <person name="Tuittila M."/>
            <person name="Merits A."/>
            <person name="Kaeaeriaeinen L."/>
        </authorList>
    </citation>
    <scope>PHOSPHORYLATION AT THR-1680 AND THR-1681</scope>
    <scope>MUTAGENESIS OF THR-1680 AND THR-1681</scope>
</reference>
<reference key="22">
    <citation type="journal article" date="2003" name="J. Biol. Chem.">
        <title>Regulation of the sequential processing of Semliki Forest virus replicase polyprotein.</title>
        <authorList>
            <person name="Vasiljeva L."/>
            <person name="Merits A."/>
            <person name="Golubtsov A."/>
            <person name="Sizemskaja V."/>
            <person name="Kaeaeriaeinen L."/>
            <person name="Ahola T."/>
        </authorList>
    </citation>
    <scope>PROTEOLYTIC CLEAVAGE (POLYPROTEIN P1234)</scope>
    <scope>PROTEOLYTIC CLEAVAGE (POLYPROTEIN P123)</scope>
</reference>
<reference key="23">
    <citation type="journal article" date="2005" name="Mol. Biol. Cell">
        <title>Importance of eIF2alpha phosphorylation and stress granule assembly in alphavirus translation regulation.</title>
        <authorList>
            <person name="McInerney G.M."/>
            <person name="Kedersha N.L."/>
            <person name="Kaufman R.J."/>
            <person name="Anderson P."/>
            <person name="Liljestrom P."/>
        </authorList>
    </citation>
    <scope>HOST TRANSLATION SHUTOFF</scope>
</reference>
<reference key="24">
    <citation type="journal article" date="2006" name="Genes Dev.">
        <title>Translational resistance of late alphavirus mRNA to eIF2alpha phosphorylation: a strategy to overcome the antiviral effect of protein kinase PKR.</title>
        <authorList>
            <person name="Ventoso I."/>
            <person name="Sanz M.A."/>
            <person name="Molina S."/>
            <person name="Berlanga J.J."/>
            <person name="Carrasco L."/>
            <person name="Esteban M."/>
        </authorList>
    </citation>
    <scope>HOST TRANSLATION SHUTOFF</scope>
</reference>
<reference key="25">
    <citation type="journal article" date="2006" name="J. Virol.">
        <title>Role for nsP2 proteins in the cessation of alphavirus minus-strand synthesis by host cells.</title>
        <authorList>
            <person name="Sawicki D.L."/>
            <person name="Perri S."/>
            <person name="Polo J.M."/>
            <person name="Sawicki S.G."/>
        </authorList>
    </citation>
    <scope>FUNCTION (PROTEASE NSP2)</scope>
</reference>
<reference key="26">
    <citation type="journal article" date="2007" name="J. Virol.">
        <title>Role of the amphipathic peptide of Semliki forest virus replicase protein nsP1 in membrane association and virus replication.</title>
        <authorList>
            <person name="Spuul P."/>
            <person name="Salonen A."/>
            <person name="Merits A."/>
            <person name="Jokitalo E."/>
            <person name="Kaeaeriaeinen L."/>
            <person name="Ahola T."/>
        </authorList>
    </citation>
    <scope>SUBCELLULAR LOCATION (MRNA-CAPPING ENZYME NSP1)</scope>
    <scope>MUTAGENESIS OF ARG-253 AND TRP-259</scope>
</reference>
<reference key="27">
    <citation type="journal article" date="2007" name="J. Virol.">
        <title>Nuclear import and export of Venezuelan equine encephalitis virus nonstructural protein 2.</title>
        <authorList>
            <person name="Montgomery S.A."/>
            <person name="Johnston R.E."/>
        </authorList>
    </citation>
    <scope>SUBCELLULAR LOCATION (PROTEASE NSP2)</scope>
    <scope>NUCLEAR LOCALIZATION SIGNAL</scope>
    <source>
        <strain>pV3000</strain>
    </source>
</reference>
<reference key="28">
    <citation type="journal article" date="2007" name="J. Gen. Virol.">
        <title>Mutations at the palmitoylation site of non-structural protein nsP1 of Semliki Forest virus attenuate virus replication and cause accumulation of compensatory mutations.</title>
        <authorList>
            <person name="Zusinaite E."/>
            <person name="Tints K."/>
            <person name="Kiiver K."/>
            <person name="Spuul P."/>
            <person name="Karo-Astover L."/>
            <person name="Merits A."/>
            <person name="Sarand I."/>
        </authorList>
    </citation>
    <scope>SUBCELLULAR LOCATION (MRNA-CAPPING ENZYME NSP1)</scope>
    <scope>PALMITOYLATION (MRNA-CAPPING ENZYME NSP1)</scope>
</reference>
<reference key="29">
    <citation type="journal article" date="2007" name="J. Virol.">
        <title>The Old World and New World alphaviruses use different virus-specific proteins for induction of transcriptional shutoff.</title>
        <authorList>
            <person name="Garmashova N."/>
            <person name="Gorchakov R."/>
            <person name="Volkova E."/>
            <person name="Paessler S."/>
            <person name="Frolova E."/>
            <person name="Frolov I."/>
        </authorList>
    </citation>
    <scope>FUNCTION (PROTEASE NSP2)</scope>
</reference>
<reference key="30">
    <citation type="journal article" date="2007" name="J. Virol.">
        <title>Semliki Forest virus nonstructural protein 2 is involved in suppression of the type I interferon response.</title>
        <authorList>
            <person name="Breakwell L."/>
            <person name="Dosenovic P."/>
            <person name="Karlsson Hedestam G.B."/>
            <person name="D'Amato M."/>
            <person name="Liljestroem P."/>
            <person name="Fazakerley J."/>
            <person name="McInerney G.M."/>
        </authorList>
    </citation>
    <scope>FUNCTION (PROTEASE NSP2)</scope>
    <source>
        <strain>SFV4-RDR</strain>
    </source>
</reference>
<reference key="31">
    <citation type="journal article" date="2012" name="J. Virol.">
        <title>Evasion of the innate immune response: the Old World alphavirus nsP2 protein induces rapid degradation of Rpb1, a catalytic subunit of RNA polymerase II.</title>
        <authorList>
            <person name="Akhrymuk I."/>
            <person name="Kulemzin S.V."/>
            <person name="Frolova E.I."/>
        </authorList>
    </citation>
    <scope>FUNCTION (PROTEASE NSP2)</scope>
</reference>
<reference key="32">
    <citation type="journal article" date="2012" name="Mol. Biol. Cell">
        <title>Sequestration of G3BP coupled with efficient translation inhibits stress granules in Semliki Forest virus infection.</title>
        <authorList>
            <person name="Panas M.D."/>
            <person name="Varjak M."/>
            <person name="Lulla A."/>
            <person name="Eng K.E."/>
            <person name="Merits A."/>
            <person name="Karlsson Hedestam G.B."/>
            <person name="McInerney G.M."/>
        </authorList>
    </citation>
    <scope>FUNCTION (NON-STRUCTURAL PROTEIN 3)</scope>
    <scope>INTERACTION WITH HOST G3BP1 (NON-STRUCTURAL PROTEIN 3)</scope>
</reference>
<reference key="33">
    <citation type="journal article" date="2014" name="J. Virol.">
        <title>The C-terminal repeat domains of nsP3 from the Old World alphaviruses bind directly to G3BP.</title>
        <authorList>
            <person name="Panas M.D."/>
            <person name="Ahola T."/>
            <person name="McInerney G.M."/>
        </authorList>
    </citation>
    <scope>DOMAIN (NON-STRUCTURAL PROTEIN 3)</scope>
    <scope>INTERACTION WITH HOST G3BP1</scope>
</reference>
<reference key="34">
    <citation type="journal article" date="2015" name="PLoS Pathog.">
        <title>Viral and cellular proteins containing FGDF motifs bind G3BP to block stress granule formation.</title>
        <authorList>
            <person name="Panas M.D."/>
            <person name="Schulte T."/>
            <person name="Thaa B."/>
            <person name="Sandalova T."/>
            <person name="Kedersha N."/>
            <person name="Achour A."/>
            <person name="McInerney G.M."/>
        </authorList>
    </citation>
    <scope>DOMAIN (NON-STRUCTURAL PROTEIN 3)</scope>
    <scope>INTERACTION WITH HOST G3BP1 (NON-STRUCTURAL PROTEIN 3)</scope>
    <scope>MUTAGENESIS OF PHE-1787; GLY-1788; ASP-1789; PHE-1790; ASP-1791; THR-1803; PHE-1804; GLY-1805; ASP-1806; PHE-1807 AND ASP-1808</scope>
</reference>
<reference key="35">
    <citation type="journal article" date="2017" name="Virus Res.">
        <title>Alphavirus polymerase and RNA replication.</title>
        <authorList>
            <person name="Pietilae M.K."/>
            <person name="Hellstroem K."/>
            <person name="Ahola T."/>
        </authorList>
    </citation>
    <scope>REVIEW</scope>
</reference>
<reference key="36">
    <citation type="journal article" date="2018" name="J. Virol.">
        <title>Timeliness of proteolytic events is prerequisite for efficient functioning of the alphaviral replicase.</title>
        <authorList>
            <person name="Lulla V."/>
            <person name="Karo-Astover L."/>
            <person name="Rausalu K."/>
            <person name="Saul S."/>
            <person name="Merits A."/>
            <person name="Lulla A."/>
        </authorList>
    </citation>
    <scope>PROTEOLYTIC CLEAVAGE (POLYPROTEIN P1234)</scope>
</reference>
<reference key="37">
    <citation type="journal article" date="2000" name="J. Biol. Chem.">
        <title>Membrane binding mechanism of an RNA virus-capping enzyme.</title>
        <authorList>
            <person name="Lampio A."/>
            <person name="Kilpelainen I."/>
            <person name="Pesonen S."/>
            <person name="Karhi K."/>
            <person name="Auvinen P."/>
            <person name="Somerharju P."/>
            <person name="Kaeaeriaeinen L."/>
        </authorList>
    </citation>
    <scope>STRUCTURE BY NMR OF 245-264</scope>
</reference>
<reference evidence="54" key="38">
    <citation type="journal article" date="2015" name="Biochem. Biophys. Res. Commun.">
        <title>Crystal structure of the G3BP2 NTF2-like domain in complex with a canonical FGDF motif peptide.</title>
        <authorList>
            <person name="Kristensen O."/>
        </authorList>
    </citation>
    <scope>X-RAY CRYSTALLOGRAPHY (2.75 ANGSTROMS) OF 1785-1792 IN COMPLEX WITH HOST G3BP2</scope>
    <scope>FUNCTION (NON-STRUCTURAL PROTEIN 3)</scope>
    <scope>INTERACTION WITH HOST G3BP2</scope>
</reference>
<reference evidence="55" key="39">
    <citation type="journal article" date="2016" name="Open Biol.">
        <title>Combined structural, biochemical and cellular evidence demonstrates that both FGDF motifs in alphavirus nsP3 are required for efficient replication.</title>
        <authorList>
            <person name="Schulte T."/>
            <person name="Liu L."/>
            <person name="Panas M.D."/>
            <person name="Thaa B."/>
            <person name="Dickson N."/>
            <person name="Gotte B."/>
            <person name="Achour A."/>
            <person name="McInerney G.M."/>
        </authorList>
    </citation>
    <scope>X-RAY CRYSTALLOGRAPHY (1.92 ANGSTROMS) OF 1785-1809</scope>
    <scope>INTERACTION WITH HOST G3BP1 (NON-STRUCTURAL PROTEIN 3)</scope>
    <scope>DOMAIN (NON-STRUCTURAL PROTEIN 3)</scope>
</reference>
<comment type="function">
    <molecule>Polyprotein P1234</molecule>
    <text evidence="4">Inactive precursor of the viral replicase, which is activated by cleavages carried out by the viral protease nsP2.</text>
</comment>
<comment type="function">
    <molecule>Polyprotein P123</molecule>
    <text evidence="2">The early replication complex formed by the polyprotein P123 and nsP4 synthesizes minus-strand RNAs (By similarity). As soon P123 is cleaved into mature proteins, the plus-strand RNAs synthesis begins (By similarity).</text>
</comment>
<comment type="function">
    <molecule>Polyprotein P123'</molecule>
    <text evidence="42">The early replication complex formed by the polyprotein P123' and nsP4 synthesizes minus-strand RNAs (Probable). Polyprotein P123' is a short-lived polyprotein that accumulates during early stage of infection (Probable). As soon P123' is cleaved into mature proteins, the plus-strand RNAs synthesis begins (Probable).</text>
</comment>
<comment type="function">
    <molecule>mRNA-capping enzyme nsP1</molecule>
    <text evidence="2 4 36 42 45 52">Cytoplasmic capping enzyme that catalyzes two virus-specific reactions: methyltransferase and nsP1 guanylyltransferase (PubMed:7831320). mRNA-capping is necessary since all viral RNAs are synthesized in the cytoplasm, and host capping enzymes are restricted to the nucleus (Probable). The enzymatic reaction involves a covalent link between 7-methyl-GMP and nsP1, whereas eukaryotic capping enzymes form a covalent complex only with GMP (Probable). nsP1 capping consists in the following reactions: GTP is first methylated into 7-methyl-GMP and then is covalently linked to nsP1 to form the m7GMp-nsP1 complex from which 7-methyl-GMP complex is transferred to the mRNA to create the cap structure (Probable). NsP1 is also needed for the initiation of the minus-strand RNAs synthesis (By similarity). Probably serves as a membrane anchor for the replication complex composed of nsP1-nsP4 (Probable). Palmitoylated nsP1 is remodeling host cell cytoskeleton, and induces filopodium-like structure formation at the surface of the host cell (By similarity).</text>
</comment>
<comment type="function">
    <molecule>Protease nsP2</molecule>
    <text evidence="4 11 12 15 20 23 27 37 43 46 47">Multifunctional protein whose N-terminus is part of the RNA polymerase complex and displays NTPase, RNA triphosphatase and helicase activities (PubMed:10217401, PubMed:10748213, PubMed:8057461). NTPase and RNA triphosphatase are involved in viral RNA capping and helicase keeps a check on the dsRNA replication intermediates (Probable). The C-terminus harbors a protease that specifically cleaves and releases the mature proteins (PubMed:11257180). Required for the shutoff of minus-strand RNAs synthesis (PubMed:16352561). Specifically inhibits the host IFN response by promoting the nuclear export of host STAT1 (By similarity). Also inhibits host transcription by inducing rapid proteasome-dependent degradation of POLR2A, a catalytic subunit of the RNAPII complex (PubMed:17108023, PubMed:22514352, PubMed:17553895). The resulting inhibition of cellular protein synthesis serves to ensure maximal viral gene expression and to evade host immune response (Probable).</text>
</comment>
<comment type="function">
    <molecule>Non-structural protein 3'</molecule>
    <text evidence="2 42">Seems to be essential for minus-strand RNAs and subgenomic 26S mRNAs synthesis (By similarity). Displays mono-ADP-ribosylhydrolase activity (Probable). ADP-ribosylation is a post-translational modification that controls various processes of the host cell and the virus probably needs to revert it for optimal viral replication (Probable). Binds proteins of FXR family and sequesters them into the viral RNA replication complexes thereby inhibiting the formation of host stress granules on viral mRNAs (Probable). The nsp3'-FXR complexes bind viral RNAs and probably orchestrate the assembly of viral replication complexes, thanks to the ability of FXR family members to self-assemble and bind DNA (Probable).</text>
</comment>
<comment type="function">
    <molecule>Non-structural protein 3</molecule>
    <text evidence="2 4 28 31 32">Seems to be essential for minus-strand RNAs and subgenomic 26S mRNAs synthesis (By similarity). Displays mono-ADP-ribosylhydrolase activity (By similarity). ADP-ribosylation is a post-translational modification that controls various processes of the host cell and the virus probably needs to revert it for optimal viral replication (By similarity). Binds proteins of G3BP family and sequesters them into the viral RNA replication complexes thereby inhibiting the formation of host stress granules on viral mRNAs (PubMed:23087212, PubMed:26410532). The nsp3-G3BP complexes bind viral RNAs and probably orchestrate the assembly of viral replication complexes, thanks to the ability of G3BP family members to self-assemble and bind DNA (PubMed:27383630).</text>
</comment>
<comment type="function">
    <molecule>RNA-directed RNA polymerase nsP4</molecule>
    <text evidence="2">RNA dependent RNA polymerase (By similarity). Replicates genomic and antigenomic RNA by recognizing replications specific signals. The early replication complex formed by the polyprotein P123 and nsP4 synthesizes minus-strand RNAs (By similarity). The late replication complex composed of fully processed nsP1-nsP4 is responsible for the production of genomic and subgenomic plus-strand RNAs (By similarity).</text>
</comment>
<comment type="catalytic activity">
    <reaction evidence="3">
        <text>GTP + S-adenosyl-L-methionine = N(7)-methyl-GTP + S-adenosyl-L-homocysteine</text>
        <dbReference type="Rhea" id="RHEA:46948"/>
        <dbReference type="ChEBI" id="CHEBI:37565"/>
        <dbReference type="ChEBI" id="CHEBI:57856"/>
        <dbReference type="ChEBI" id="CHEBI:59789"/>
        <dbReference type="ChEBI" id="CHEBI:87133"/>
    </reaction>
</comment>
<comment type="catalytic activity">
    <reaction evidence="36">
        <text>N(7)-methyl-GTP + L-histidyl-[protein] = N(tele)-(N(7)-methylguanosine 5'-phospho)-L-histidyl-[protein] + diphosphate</text>
        <dbReference type="Rhea" id="RHEA:54792"/>
        <dbReference type="Rhea" id="RHEA-COMP:9745"/>
        <dbReference type="Rhea" id="RHEA-COMP:13995"/>
        <dbReference type="ChEBI" id="CHEBI:29979"/>
        <dbReference type="ChEBI" id="CHEBI:33019"/>
        <dbReference type="ChEBI" id="CHEBI:87133"/>
        <dbReference type="ChEBI" id="CHEBI:138334"/>
    </reaction>
    <physiologicalReaction direction="left-to-right" evidence="36">
        <dbReference type="Rhea" id="RHEA:54793"/>
    </physiologicalReaction>
</comment>
<comment type="catalytic activity">
    <reaction evidence="3">
        <text>N(tele)-(N(7)-methylguanosine 5'-phospho)-L-histidyl-[protein] + a 5'-end diphospho-(purine-ribonucleoside) in mRNA + H(+) = a 5'-end (N(7)-methyl 5'-triphosphoguanosine)-(purine-ribonucleoside) in mRNA + L-histidyl-[protein]</text>
        <dbReference type="Rhea" id="RHEA:54800"/>
        <dbReference type="Rhea" id="RHEA-COMP:9745"/>
        <dbReference type="Rhea" id="RHEA-COMP:12925"/>
        <dbReference type="Rhea" id="RHEA-COMP:13929"/>
        <dbReference type="Rhea" id="RHEA-COMP:13995"/>
        <dbReference type="ChEBI" id="CHEBI:15378"/>
        <dbReference type="ChEBI" id="CHEBI:29979"/>
        <dbReference type="ChEBI" id="CHEBI:133968"/>
        <dbReference type="ChEBI" id="CHEBI:138276"/>
        <dbReference type="ChEBI" id="CHEBI:138334"/>
    </reaction>
</comment>
<comment type="catalytic activity">
    <reaction evidence="12">
        <text>a 5'-end triphospho-ribonucleoside in mRNA + H2O = a 5'-end diphospho-ribonucleoside in mRNA + phosphate + H(+)</text>
        <dbReference type="Rhea" id="RHEA:67004"/>
        <dbReference type="Rhea" id="RHEA-COMP:17164"/>
        <dbReference type="Rhea" id="RHEA-COMP:17165"/>
        <dbReference type="ChEBI" id="CHEBI:15377"/>
        <dbReference type="ChEBI" id="CHEBI:15378"/>
        <dbReference type="ChEBI" id="CHEBI:43474"/>
        <dbReference type="ChEBI" id="CHEBI:167616"/>
        <dbReference type="ChEBI" id="CHEBI:167618"/>
        <dbReference type="EC" id="3.6.1.74"/>
    </reaction>
    <physiologicalReaction direction="left-to-right" evidence="12">
        <dbReference type="Rhea" id="RHEA:67005"/>
    </physiologicalReaction>
</comment>
<comment type="catalytic activity">
    <reaction evidence="37">
        <text>a ribonucleoside 5'-triphosphate + H2O = a ribonucleoside 5'-diphosphate + phosphate + H(+)</text>
        <dbReference type="Rhea" id="RHEA:23680"/>
        <dbReference type="ChEBI" id="CHEBI:15377"/>
        <dbReference type="ChEBI" id="CHEBI:15378"/>
        <dbReference type="ChEBI" id="CHEBI:43474"/>
        <dbReference type="ChEBI" id="CHEBI:57930"/>
        <dbReference type="ChEBI" id="CHEBI:61557"/>
        <dbReference type="EC" id="3.6.1.15"/>
    </reaction>
</comment>
<comment type="catalytic activity">
    <reaction evidence="11">
        <text>ATP + H2O = ADP + phosphate + H(+)</text>
        <dbReference type="Rhea" id="RHEA:13065"/>
        <dbReference type="ChEBI" id="CHEBI:15377"/>
        <dbReference type="ChEBI" id="CHEBI:15378"/>
        <dbReference type="ChEBI" id="CHEBI:30616"/>
        <dbReference type="ChEBI" id="CHEBI:43474"/>
        <dbReference type="ChEBI" id="CHEBI:456216"/>
        <dbReference type="EC" id="3.6.4.13"/>
    </reaction>
</comment>
<comment type="catalytic activity">
    <reaction evidence="6">
        <text>RNA(n) + a ribonucleoside 5'-triphosphate = RNA(n+1) + diphosphate</text>
        <dbReference type="Rhea" id="RHEA:21248"/>
        <dbReference type="Rhea" id="RHEA-COMP:14527"/>
        <dbReference type="Rhea" id="RHEA-COMP:17342"/>
        <dbReference type="ChEBI" id="CHEBI:33019"/>
        <dbReference type="ChEBI" id="CHEBI:61557"/>
        <dbReference type="ChEBI" id="CHEBI:140395"/>
        <dbReference type="EC" id="2.7.7.48"/>
    </reaction>
</comment>
<comment type="catalytic activity">
    <reaction evidence="2">
        <text>RNA(n) + ATP = RNA(n)-3'-adenine ribonucleotide + diphosphate</text>
        <dbReference type="Rhea" id="RHEA:11332"/>
        <dbReference type="Rhea" id="RHEA-COMP:14527"/>
        <dbReference type="Rhea" id="RHEA-COMP:17347"/>
        <dbReference type="ChEBI" id="CHEBI:30616"/>
        <dbReference type="ChEBI" id="CHEBI:33019"/>
        <dbReference type="ChEBI" id="CHEBI:140395"/>
        <dbReference type="ChEBI" id="CHEBI:173115"/>
        <dbReference type="EC" id="2.7.7.19"/>
    </reaction>
</comment>
<comment type="catalytic activity">
    <reaction evidence="4">
        <text>4-O-(ADP-D-ribosyl)-L-aspartyl-[protein] + H2O = L-aspartyl-[protein] + ADP-D-ribose + H(+)</text>
        <dbReference type="Rhea" id="RHEA:54428"/>
        <dbReference type="Rhea" id="RHEA-COMP:9867"/>
        <dbReference type="Rhea" id="RHEA-COMP:13832"/>
        <dbReference type="ChEBI" id="CHEBI:15377"/>
        <dbReference type="ChEBI" id="CHEBI:15378"/>
        <dbReference type="ChEBI" id="CHEBI:29961"/>
        <dbReference type="ChEBI" id="CHEBI:57967"/>
        <dbReference type="ChEBI" id="CHEBI:138102"/>
    </reaction>
    <physiologicalReaction direction="left-to-right" evidence="4">
        <dbReference type="Rhea" id="RHEA:54429"/>
    </physiologicalReaction>
</comment>
<comment type="catalytic activity">
    <reaction evidence="4">
        <text>5-O-(ADP-D-ribosyl)-L-glutamyl-[protein] + H2O = L-glutamyl-[protein] + ADP-D-ribose + H(+)</text>
        <dbReference type="Rhea" id="RHEA:58248"/>
        <dbReference type="Rhea" id="RHEA-COMP:10208"/>
        <dbReference type="Rhea" id="RHEA-COMP:15089"/>
        <dbReference type="ChEBI" id="CHEBI:15377"/>
        <dbReference type="ChEBI" id="CHEBI:15378"/>
        <dbReference type="ChEBI" id="CHEBI:29973"/>
        <dbReference type="ChEBI" id="CHEBI:57967"/>
        <dbReference type="ChEBI" id="CHEBI:142540"/>
    </reaction>
    <physiologicalReaction direction="left-to-right" evidence="4">
        <dbReference type="Rhea" id="RHEA:58249"/>
    </physiologicalReaction>
</comment>
<comment type="catalytic activity">
    <reaction evidence="4">
        <text>ADP-alpha-D-ribose 1''-phosphate + H2O = ADP-D-ribose + phosphate</text>
        <dbReference type="Rhea" id="RHEA:25029"/>
        <dbReference type="ChEBI" id="CHEBI:15377"/>
        <dbReference type="ChEBI" id="CHEBI:43474"/>
        <dbReference type="ChEBI" id="CHEBI:57967"/>
        <dbReference type="ChEBI" id="CHEBI:58753"/>
        <dbReference type="EC" id="3.1.3.84"/>
    </reaction>
    <physiologicalReaction direction="left-to-right" evidence="4">
        <dbReference type="Rhea" id="RHEA:25030"/>
    </physiologicalReaction>
</comment>
<comment type="cofactor">
    <cofactor evidence="2">
        <name>Mg(2+)</name>
        <dbReference type="ChEBI" id="CHEBI:18420"/>
    </cofactor>
    <cofactor evidence="2">
        <name>Mn(2+)</name>
        <dbReference type="ChEBI" id="CHEBI:29035"/>
    </cofactor>
    <text evidence="2">For nsP4 adenylyltransferase activity; Mn(2+) supports catalysis at 60% of the levels observed with Mg(2+).</text>
</comment>
<comment type="cofactor">
    <cofactor evidence="2">
        <name>Mg(2+)</name>
        <dbReference type="ChEBI" id="CHEBI:18420"/>
    </cofactor>
    <text evidence="2">For nsP4 RNA-directed RNA polymerase activity.</text>
</comment>
<comment type="cofactor">
    <cofactor evidence="3">
        <name>Mg(2+)</name>
        <dbReference type="ChEBI" id="CHEBI:18420"/>
    </cofactor>
    <text evidence="3">For nsP1 guanylylation.</text>
</comment>
<comment type="cofactor">
    <cofactor>
        <name>Mg(2+)</name>
        <dbReference type="ChEBI" id="CHEBI:18420"/>
    </cofactor>
    <text evidence="4">For nsP2 RNA triphosphatase activity.</text>
</comment>
<comment type="cofactor">
    <cofactor>
        <name>Mg(2+)</name>
        <dbReference type="ChEBI" id="CHEBI:18420"/>
    </cofactor>
    <text evidence="4">For nsP2 NTPase activity.</text>
</comment>
<comment type="activity regulation">
    <molecule>Protease nsP2</molecule>
    <text evidence="16">Inhibited by N-ethylmaleimide, Zn(2+), and Cu2(2+).</text>
</comment>
<comment type="biophysicochemical properties">
    <kinetics>
        <KM evidence="12">2.99 mM for nsP2 RNA triphosphatase activity (at pH 8.0)</KM>
        <KM evidence="12">90 mM for nsP2 NTPase activity (at pH 7.5)</KM>
    </kinetics>
</comment>
<comment type="subunit">
    <molecule>mRNA-capping enzyme nsP1</molecule>
    <text evidence="2 3">Interacts with non-structural protein 3 (By similarity). Interacts with RNA-directed RNA polymerase nsP4 (By similarity). Interacts with protease nsP2 (By similarity). interacts with itself (By similarity).</text>
</comment>
<comment type="subunit">
    <molecule>Non-structural protein 3</molecule>
    <text evidence="2 3 28 29 30 31 32">Interacts with mRNA-capping enzyme nsP1 (By similarity). Interacts with host DDX1 (By similarity). Interacts with host DDX3 (By similarity). Interacts (via C-terminus) with host G3BP1; this interaction inhibits the formation of host stress granules on viral mRNAs and the nsp3-G3BP1 complexes bind viral RNAs and probably orchestrate the assembly of viral replication complexes (PubMed:23087212, PubMed:24623412, PubMed:25658430, PubMed:27383630). Interacts (via C-terminus) with host G3BP2; this interaction inhibits the formation of host stress granules on viral mRNAs and the nsp3-G3BP2 complexes bind viral RNAs and probably orchestrate the assembly of viral replication complexes (PubMed:26410532).</text>
</comment>
<comment type="subunit">
    <molecule>RNA-directed RNA polymerase nsP4</molecule>
    <text evidence="2 3">Interacts with mRNA-capping enzyme nsP1 (By similarity). Interacts with protease nsP2 (By similarity). interacts with itself (By similarity).</text>
</comment>
<comment type="subunit">
    <molecule>Protease nsP2</molecule>
    <text evidence="2 3">Interacts with RNA-directed RNA polymerase nsP4 (By similarity). Interacts with mRNA-capping enzyme nsP1 (By similarity). Interacts with KPNA1/karyopherin-alpha1; this interaction probably allows the active transport of protease nsP2 into the host nucleus (By similarity).</text>
</comment>
<comment type="subcellular location">
    <molecule>Polyprotein P1234</molecule>
    <subcellularLocation>
        <location evidence="42">Host cytoplasmic vesicle membrane</location>
        <topology evidence="42">Peripheral membrane protein</topology>
    </subcellularLocation>
    <text evidence="42">Part of cytoplasmic vesicles, which are probably formed at the plasma membrane and internalized leading to late endosomal/lysosomal spherules containing the replication complex.</text>
</comment>
<comment type="subcellular location">
    <molecule>Polyprotein P123'</molecule>
    <subcellularLocation>
        <location evidence="42">Host cytoplasmic vesicle membrane</location>
        <topology evidence="42">Peripheral membrane protein</topology>
    </subcellularLocation>
    <text evidence="42">Part of cytoplasmic vesicles, which are probably formed at the plasma membrane and internalized leading to late endosomal/lysosomal spherules containing the replication complex.</text>
</comment>
<comment type="subcellular location">
    <molecule>Polyprotein P123</molecule>
    <subcellularLocation>
        <location evidence="42">Host cytoplasmic vesicle membrane</location>
        <topology evidence="42">Peripheral membrane protein</topology>
    </subcellularLocation>
    <text evidence="42">Part of cytoplasmic vesicles, which are probably formed at the plasma membrane and internalized leading to late endosomal/lysosomal spherules containing the replication complex.</text>
</comment>
<comment type="subcellular location">
    <molecule>mRNA-capping enzyme nsP1</molecule>
    <subcellularLocation>
        <location evidence="51">Host cytoplasmic vesicle membrane</location>
        <topology evidence="45 53">Lipid-anchor</topology>
    </subcellularLocation>
    <subcellularLocation>
        <location evidence="24 35">Host cell membrane</location>
        <topology evidence="45 53">Lipid-anchor</topology>
        <orientation evidence="35">Cytoplasmic side</orientation>
    </subcellularLocation>
    <subcellularLocation>
        <location evidence="24 39">Host cell projection</location>
        <location evidence="24 39">Host filopodium</location>
    </subcellularLocation>
    <text evidence="24 39 41">In the late phase of infection, the polyprotein is quickly cleaved before localization to cellular membranes. Then a fraction of nsP1 localizes to the inner surface of the plasma membrane and its filopodial extensions. Only the palmitoylated nsP1 localizes to the host filopodia (PubMed:17554031, PubMed:8910486). NsP1 is also part of cytoplasmic vesicles, which are probably formed at the plasma membrane and internalized leading to late endosomal/lysosomal spherules containing the replication complex (PubMed:28104453).</text>
</comment>
<comment type="subcellular location">
    <molecule>Protease nsP2</molecule>
    <subcellularLocation>
        <location evidence="44">Host cytoplasmic vesicle membrane</location>
        <topology evidence="42">Peripheral membrane protein</topology>
    </subcellularLocation>
    <subcellularLocation>
        <location evidence="18 25 38">Host nucleus</location>
    </subcellularLocation>
    <subcellularLocation>
        <location evidence="38">Host cytoplasm</location>
    </subcellularLocation>
    <text evidence="3 38 41">In the late phase of infection, the polyprotein is quickly cleaved before localization to cellular membranes. Then approximately half of nsP2 is found in the nucleus (PubMed:8610462). Shuttles between cytoplasm and nucleus (By similarity). NsP2 is also part of cytoplasmic vesicles, which are probably formed at the plasma membrane and internalized leading to late endosomal/lysosomal spherules containing the replication complex (PubMed:28104453).</text>
</comment>
<comment type="subcellular location">
    <molecule>Non-structural protein 3</molecule>
    <subcellularLocation>
        <location evidence="2">Host cytoplasmic vesicle membrane</location>
        <topology evidence="42">Peripheral membrane protein</topology>
    </subcellularLocation>
    <text evidence="2">In the late phase of infection, the polyprotein is quickly cleaved before localization to cellular membranes. Then nsP3 and nsP3' form aggregates in cytoplasm (By similarity). NsP3 is also part of cytoplasmic vesicles, which are probably formed at the plasma membrane and internalized leading to late endosomal/lysosomal spherules containing the replication complex (By similarity).</text>
</comment>
<comment type="subcellular location">
    <molecule>Non-structural protein 3'</molecule>
    <subcellularLocation>
        <location evidence="2">Host cytoplasmic vesicle membrane</location>
        <topology evidence="42">Peripheral membrane protein</topology>
    </subcellularLocation>
    <text evidence="2">In the late phase of infection, the polyprotein is quickly cleaved before localization to cellular membranes. Then nsP3 and nsP3' form aggregates in cytoplasm (By similarity). NsP3 is also part of cytoplasmic vesicles, which are probably formed at the plasma membrane and internalized leading to late endosomal/lysosomal spherules containing the replication complex (By similarity).</text>
</comment>
<comment type="subcellular location">
    <molecule>RNA-directed RNA polymerase nsP4</molecule>
    <subcellularLocation>
        <location>Host cytoplasmic vesicle membrane</location>
        <topology evidence="33">Peripheral membrane protein</topology>
    </subcellularLocation>
    <text evidence="41">NsP4 is part of cytoplasmic vesicles, which are probably formed at the plasma membrane and internalized leading to late endosomal/lysosomal spherules containing the replication complex.</text>
</comment>
<comment type="domain">
    <molecule>Protease nsP2</molecule>
    <text evidence="3 4">The N-terminus exhibits NTPase and RNA triphosphatase activities and is proposed to have helicase activity, whereas the C-terminus possesses protease activity (By similarity). Contains a nuclear localization signal and a nuclear export signal, these two motifs are probably involved in the shuttling between the cytoplasm and the nucleus of nsP2 (By similarity). The C-terminus is required for promoting the export of host STAT1 (By similarity).</text>
</comment>
<comment type="domain">
    <molecule>Non-structural protein 3</molecule>
    <text evidence="2 4 29 30 32">In the N-terminus, the macro domain displays a mono-ADP-ribosylhydrolase activity (By similarity). The central part has a zinc-binding function (By similarity). The C-terminus contains two FGDF motifs necessary and sufficient for formation of the nsP3/G3BP1 complex (PubMed:24623412, PubMed:25658430, PubMed:27383630).</text>
</comment>
<comment type="domain">
    <molecule>Non-structural protein 3'</molecule>
    <text evidence="2 4 48 49 50">In the N-terminus, the macro domain displays a mono-ADP-ribosylhydrolase activity (By similarity). The central part has a zinc-binding function (By similarity). The C-terminus contains two FGDF motifs necessary and sufficient for formation of the nsP3'/G3BP1 complex (Probable).</text>
</comment>
<comment type="PTM">
    <molecule>Polyprotein P1234</molecule>
    <text evidence="2 15 17 34">Specific enzymatic cleavages in vivo yield mature proteins (PubMed:11257180, PubMed:12917405, PubMed:29695431). The processing of the polyprotein is temporally regulated (PubMed:12917405, PubMed:29695431). In early stages (1.7 hpi), P1234 is first cleaved in trans through its nsP2 protease activity, releasing P123' and nsP4, which associate to form the early replication complex (PubMed:12917405). At the same time, P1234 is also cut at the nsP1/nsP2 site early in infection but with lower efficiency (PubMed:12917405). After replication of the viral minus-strand RNAs (4 hpi), the polyproteins are cut at the nsP1/nsP2 and nsP2/nsP3 sites very efficiently, preventing accumulation of P123' and P1234 and allowing the formation of the late replication complex (PubMed:12917405). NsP3'/nsP4 site is not cleaved anymore and P34 is produced rather than nsP4 (By similarity).</text>
</comment>
<comment type="PTM">
    <molecule>Polyprotein P123'</molecule>
    <text evidence="15 17 34">Specific enzymatic cleavages in vivo yield mature proteins (PubMed:11257180, PubMed:12917405, PubMed:29695431). The processing of the polyprotein is temporally regulated (PubMed:12917405, PubMed:29695431). In early stages (1.7 hpi), P123' is cleaved at the nsP1/nsP2 site with low efficiency (PubMed:12917405). After replication of the viral minus-strand RNAs (4 hpi), the polyproteins are cut at the nsP1/nsP2 and nsP2/nsP3 sites very efficiently, preventing accumulation of P123' and allowing the formation of the late replication complex (PubMed:12917405).</text>
</comment>
<comment type="PTM">
    <molecule>Polyprotein P123</molecule>
    <text evidence="15 17 34">Specific enzymatic cleavages in vivo yield mature proteins (PubMed:11257180, PubMed:12917405, PubMed:29695431). The processing of the polyprotein is temporally regulated (PubMed:12917405, PubMed:29695431). In early stages (1.7 hpi), P123 is cleaved at the nsP1/nsP2 site with low efficiency (PubMed:12917405). After replication of the viral minus-strand RNAs (4 hpi), the polyproteins are cut at the nsP1/nsP2 and nsP2/nsP3 sites very efficiently, preventing accumulation of P123 and allowing the formation of the late replication complex (PubMed:12917405).</text>
</comment>
<comment type="PTM">
    <molecule>mRNA-capping enzyme nsP1</molecule>
    <text evidence="4 13 39">Palmitoylated by host palmitoyltransferases ZDHHC2 and ZDHHC19.</text>
</comment>
<comment type="PTM">
    <molecule>Non-structural protein 3</molecule>
    <text evidence="14">Phosphorylated by host on serines and threonines.</text>
</comment>
<comment type="PTM">
    <molecule>Non-structural protein 3'</molecule>
    <text evidence="14">Phosphorylated by host on serines and threonines.</text>
</comment>
<comment type="PTM">
    <molecule>RNA-directed RNA polymerase nsP4</molecule>
    <text evidence="2">Ubiquitinated; targets the protein for rapid degradation via the ubiquitin system (By similarity). Nsp4 is present in extremely low quantities due to low frequency of translation through the amber stop-codon and the degradation by the ubiquitin pathway (By similarity).</text>
</comment>
<comment type="miscellaneous">
    <text evidence="2 19 21">Viral replication produces dsRNA in the late phase of infection, resulting in a strong activation of host EIF2AK2/PKR, leading to almost complete phosphorylation of EIF2A (PubMed:15930128, PubMed:16391235). This inactivates completely cellular translation initiation, resulting shutoff of host proteins synthesis (PubMed:16391235). However, phosphorylation of EIF2A is probably not the only mechanism responsible for the host translation shutoff (By similarity). The viral translation can still occur normally because it relies on a hairpin structure in the coding region of sgRNA and is EIF2A-, EIF2D-, EIF4G- EIF4A-independent (By similarity).</text>
</comment>
<comment type="caution">
    <text evidence="1 4 26 42">There is no stop codon readthrough before nsP4 in the prototype strain sequence. The opal termination codon may have been mutated to a sense codon on passage in cell culture since the prototype strain SFV4 is derived from the L10 strain, which is a laboratory strain resulting from extensive passaging. Isolate Me Tri virus, which has clearly been identified as a Semliki virus isolate, has an opal codon instead of Arg-1812 further confirming the idea that the opal codon may have muted in many SFV strains (PubMed:18753222). In the isolates that have an opal codon, the genome codes for P123, but readthrough of a terminator codon UGA occurs between the codons for Leu-1811 and Leu-1813 giving rise to P1234. P1234 is cleaved quickly by nsP2 into P123' and nsP4 (By similarity). Further processing of p123' gives nsP1, nsP2 and nsP3' which is 6 amino acids longer than nsP3 since the cleavage site is after the readthrough (By similarity). The presence of the opal codon may be a requirement for viral maintenance in both vertebrate and invertebrate hosts and a selective advantage may be conferred in cell culture for the sense codon (By similarity).</text>
</comment>
<dbReference type="EC" id="2.1.1.-" evidence="3"/>
<dbReference type="EC" id="2.7.7.-" evidence="3"/>
<dbReference type="EC" id="3.4.22.-" evidence="4"/>
<dbReference type="EC" id="3.6.1.15" evidence="37"/>
<dbReference type="EC" id="3.6.1.74" evidence="12"/>
<dbReference type="EC" id="3.6.4.13" evidence="11"/>
<dbReference type="EC" id="3.1.3.84" evidence="4"/>
<dbReference type="EC" id="2.7.7.19" evidence="2"/>
<dbReference type="EC" id="2.7.7.48" evidence="6"/>
<dbReference type="EMBL" id="X04129">
    <property type="protein sequence ID" value="CAA27741.1"/>
    <property type="molecule type" value="Genomic_RNA"/>
</dbReference>
<dbReference type="EMBL" id="AJ251359">
    <property type="protein sequence ID" value="CAB62256.1"/>
    <property type="molecule type" value="Genomic_RNA"/>
</dbReference>
<dbReference type="EMBL" id="AY112987">
    <property type="protein sequence ID" value="AAM64226.1"/>
    <property type="molecule type" value="Genomic_RNA"/>
</dbReference>
<dbReference type="EMBL" id="DQ189079">
    <property type="protein sequence ID" value="ABA29023.1"/>
    <property type="molecule type" value="Genomic_RNA"/>
</dbReference>
<dbReference type="EMBL" id="DQ189080">
    <property type="protein sequence ID" value="ABA29024.1"/>
    <property type="molecule type" value="Genomic_RNA"/>
</dbReference>
<dbReference type="EMBL" id="DQ189081">
    <property type="protein sequence ID" value="ABA29025.1"/>
    <property type="molecule type" value="Genomic_RNA"/>
</dbReference>
<dbReference type="EMBL" id="DQ189082">
    <property type="protein sequence ID" value="ABA29026.1"/>
    <property type="molecule type" value="Genomic_RNA"/>
</dbReference>
<dbReference type="EMBL" id="DQ189083">
    <property type="protein sequence ID" value="ABA29028.1"/>
    <property type="molecule type" value="Genomic_RNA"/>
</dbReference>
<dbReference type="EMBL" id="DQ189084">
    <property type="protein sequence ID" value="ABA29029.1"/>
    <property type="molecule type" value="Genomic_RNA"/>
</dbReference>
<dbReference type="EMBL" id="DQ189085">
    <property type="protein sequence ID" value="ABA29031.1"/>
    <property type="molecule type" value="Genomic_RNA"/>
</dbReference>
<dbReference type="EMBL" id="DQ189086">
    <property type="protein sequence ID" value="ABA29032.1"/>
    <property type="molecule type" value="Genomic_RNA"/>
</dbReference>
<dbReference type="EMBL" id="EU350586">
    <property type="protein sequence ID" value="ACB12687.1"/>
    <property type="molecule type" value="Genomic_RNA"/>
</dbReference>
<dbReference type="PIR" id="A23592">
    <property type="entry name" value="MNWVSF"/>
</dbReference>
<dbReference type="RefSeq" id="NP_463457.1">
    <property type="nucleotide sequence ID" value="NC_003215.1"/>
</dbReference>
<dbReference type="PDB" id="1FW5">
    <property type="method" value="NMR"/>
    <property type="chains" value="A=245-264"/>
</dbReference>
<dbReference type="PDB" id="5DRV">
    <property type="method" value="X-ray"/>
    <property type="resolution" value="2.75 A"/>
    <property type="chains" value="B=1785-1792"/>
</dbReference>
<dbReference type="PDB" id="5FW5">
    <property type="method" value="X-ray"/>
    <property type="resolution" value="1.92 A"/>
    <property type="chains" value="C=1785-1809"/>
</dbReference>
<dbReference type="PDBsum" id="1FW5"/>
<dbReference type="PDBsum" id="5DRV"/>
<dbReference type="PDBsum" id="5FW5"/>
<dbReference type="SMR" id="P08411"/>
<dbReference type="ELM" id="P08411"/>
<dbReference type="IntAct" id="P08411">
    <property type="interactions" value="4"/>
</dbReference>
<dbReference type="MEROPS" id="C09.001"/>
<dbReference type="iPTMnet" id="P08411"/>
<dbReference type="SwissPalm" id="P08411"/>
<dbReference type="GeneID" id="922350"/>
<dbReference type="KEGG" id="vg:922350"/>
<dbReference type="BRENDA" id="3.4.22.B79">
    <property type="organism ID" value="5671"/>
</dbReference>
<dbReference type="BRENDA" id="3.6.1.74">
    <property type="organism ID" value="5671"/>
</dbReference>
<dbReference type="SABIO-RK" id="P08411"/>
<dbReference type="EvolutionaryTrace" id="P08411"/>
<dbReference type="Proteomes" id="UP000000570">
    <property type="component" value="Genome"/>
</dbReference>
<dbReference type="Proteomes" id="UP000100607">
    <property type="component" value="Genome"/>
</dbReference>
<dbReference type="Proteomes" id="UP000125835">
    <property type="component" value="Genome"/>
</dbReference>
<dbReference type="Proteomes" id="UP000136172">
    <property type="component" value="Genome"/>
</dbReference>
<dbReference type="Proteomes" id="UP000166518">
    <property type="component" value="Genome"/>
</dbReference>
<dbReference type="Proteomes" id="UP000174511">
    <property type="component" value="Genome"/>
</dbReference>
<dbReference type="GO" id="GO:0044162">
    <property type="term" value="C:host cell cytoplasmic vesicle membrane"/>
    <property type="evidence" value="ECO:0007669"/>
    <property type="project" value="UniProtKB-SubCell"/>
</dbReference>
<dbReference type="GO" id="GO:0044176">
    <property type="term" value="C:host cell filopodium"/>
    <property type="evidence" value="ECO:0007669"/>
    <property type="project" value="UniProtKB-SubCell"/>
</dbReference>
<dbReference type="GO" id="GO:0042025">
    <property type="term" value="C:host cell nucleus"/>
    <property type="evidence" value="ECO:0007669"/>
    <property type="project" value="UniProtKB-SubCell"/>
</dbReference>
<dbReference type="GO" id="GO:0020002">
    <property type="term" value="C:host cell plasma membrane"/>
    <property type="evidence" value="ECO:0007669"/>
    <property type="project" value="UniProtKB-SubCell"/>
</dbReference>
<dbReference type="GO" id="GO:0016020">
    <property type="term" value="C:membrane"/>
    <property type="evidence" value="ECO:0007669"/>
    <property type="project" value="UniProtKB-KW"/>
</dbReference>
<dbReference type="GO" id="GO:0005524">
    <property type="term" value="F:ATP binding"/>
    <property type="evidence" value="ECO:0007669"/>
    <property type="project" value="UniProtKB-KW"/>
</dbReference>
<dbReference type="GO" id="GO:0016887">
    <property type="term" value="F:ATP hydrolysis activity"/>
    <property type="evidence" value="ECO:0007669"/>
    <property type="project" value="RHEA"/>
</dbReference>
<dbReference type="GO" id="GO:0008234">
    <property type="term" value="F:cysteine-type peptidase activity"/>
    <property type="evidence" value="ECO:0007669"/>
    <property type="project" value="UniProtKB-KW"/>
</dbReference>
<dbReference type="GO" id="GO:0005525">
    <property type="term" value="F:GTP binding"/>
    <property type="evidence" value="ECO:0007669"/>
    <property type="project" value="UniProtKB-KW"/>
</dbReference>
<dbReference type="GO" id="GO:0046872">
    <property type="term" value="F:metal ion binding"/>
    <property type="evidence" value="ECO:0007669"/>
    <property type="project" value="UniProtKB-KW"/>
</dbReference>
<dbReference type="GO" id="GO:0140818">
    <property type="term" value="F:mRNA 5'-triphosphate monophosphatase activity"/>
    <property type="evidence" value="ECO:0007669"/>
    <property type="project" value="RHEA"/>
</dbReference>
<dbReference type="GO" id="GO:0008174">
    <property type="term" value="F:mRNA methyltransferase activity"/>
    <property type="evidence" value="ECO:0007669"/>
    <property type="project" value="InterPro"/>
</dbReference>
<dbReference type="GO" id="GO:1990817">
    <property type="term" value="F:poly(A) RNA polymerase activity"/>
    <property type="evidence" value="ECO:0007669"/>
    <property type="project" value="UniProtKB-EC"/>
</dbReference>
<dbReference type="GO" id="GO:0004651">
    <property type="term" value="F:polynucleotide 5'-phosphatase activity"/>
    <property type="evidence" value="ECO:0007669"/>
    <property type="project" value="UniProtKB-EC"/>
</dbReference>
<dbReference type="GO" id="GO:0003723">
    <property type="term" value="F:RNA binding"/>
    <property type="evidence" value="ECO:0007669"/>
    <property type="project" value="UniProtKB-KW"/>
</dbReference>
<dbReference type="GO" id="GO:0003724">
    <property type="term" value="F:RNA helicase activity"/>
    <property type="evidence" value="ECO:0007669"/>
    <property type="project" value="UniProtKB-EC"/>
</dbReference>
<dbReference type="GO" id="GO:0003968">
    <property type="term" value="F:RNA-directed RNA polymerase activity"/>
    <property type="evidence" value="ECO:0007669"/>
    <property type="project" value="UniProtKB-KW"/>
</dbReference>
<dbReference type="GO" id="GO:0006370">
    <property type="term" value="P:7-methylguanosine mRNA capping"/>
    <property type="evidence" value="ECO:0007669"/>
    <property type="project" value="UniProtKB-KW"/>
</dbReference>
<dbReference type="GO" id="GO:0006351">
    <property type="term" value="P:DNA-templated transcription"/>
    <property type="evidence" value="ECO:0007669"/>
    <property type="project" value="InterPro"/>
</dbReference>
<dbReference type="GO" id="GO:0032259">
    <property type="term" value="P:methylation"/>
    <property type="evidence" value="ECO:0007669"/>
    <property type="project" value="UniProtKB-KW"/>
</dbReference>
<dbReference type="GO" id="GO:0016556">
    <property type="term" value="P:mRNA modification"/>
    <property type="evidence" value="ECO:0007669"/>
    <property type="project" value="InterPro"/>
</dbReference>
<dbReference type="GO" id="GO:0006508">
    <property type="term" value="P:proteolysis"/>
    <property type="evidence" value="ECO:0007669"/>
    <property type="project" value="UniProtKB-KW"/>
</dbReference>
<dbReference type="GO" id="GO:0039657">
    <property type="term" value="P:symbiont-mediated suppression of host gene expression"/>
    <property type="evidence" value="ECO:0007669"/>
    <property type="project" value="UniProtKB-KW"/>
</dbReference>
<dbReference type="GO" id="GO:0052170">
    <property type="term" value="P:symbiont-mediated suppression of host innate immune response"/>
    <property type="evidence" value="ECO:0007669"/>
    <property type="project" value="UniProtKB-KW"/>
</dbReference>
<dbReference type="GO" id="GO:0039563">
    <property type="term" value="P:symbiont-mediated suppression of host JAK-STAT cascade via inhibition of STAT1 activity"/>
    <property type="evidence" value="ECO:0007669"/>
    <property type="project" value="UniProtKB-KW"/>
</dbReference>
<dbReference type="GO" id="GO:0039523">
    <property type="term" value="P:symbiont-mediated suppression of host mRNA transcription via inhibition of RNA polymerase II activity"/>
    <property type="evidence" value="ECO:0007669"/>
    <property type="project" value="UniProtKB-KW"/>
</dbReference>
<dbReference type="GO" id="GO:0039502">
    <property type="term" value="P:symbiont-mediated suppression of host type I interferon-mediated signaling pathway"/>
    <property type="evidence" value="ECO:0007669"/>
    <property type="project" value="UniProtKB-KW"/>
</dbReference>
<dbReference type="GO" id="GO:0039694">
    <property type="term" value="P:viral RNA genome replication"/>
    <property type="evidence" value="ECO:0007669"/>
    <property type="project" value="InterPro"/>
</dbReference>
<dbReference type="CDD" id="cd21557">
    <property type="entry name" value="Macro_X_Nsp3-like"/>
    <property type="match status" value="1"/>
</dbReference>
<dbReference type="CDD" id="cd23250">
    <property type="entry name" value="Togaviridae_RdRp"/>
    <property type="match status" value="1"/>
</dbReference>
<dbReference type="FunFam" id="3.40.220.10:FF:000015">
    <property type="entry name" value="Polyprotein P1234"/>
    <property type="match status" value="1"/>
</dbReference>
<dbReference type="FunFam" id="3.40.50.300:FF:001415">
    <property type="entry name" value="Polyprotein P1234"/>
    <property type="match status" value="1"/>
</dbReference>
<dbReference type="Gene3D" id="3.90.70.110">
    <property type="entry name" value="Alphavirus nsP2 protease domain"/>
    <property type="match status" value="1"/>
</dbReference>
<dbReference type="Gene3D" id="3.40.220.10">
    <property type="entry name" value="Leucine Aminopeptidase, subunit E, domain 1"/>
    <property type="match status" value="1"/>
</dbReference>
<dbReference type="Gene3D" id="3.40.50.300">
    <property type="entry name" value="P-loop containing nucleotide triphosphate hydrolases"/>
    <property type="match status" value="2"/>
</dbReference>
<dbReference type="Gene3D" id="3.40.50.150">
    <property type="entry name" value="Vaccinia Virus protein VP39"/>
    <property type="match status" value="1"/>
</dbReference>
<dbReference type="InterPro" id="IPR027351">
    <property type="entry name" value="(+)RNA_virus_helicase_core_dom"/>
</dbReference>
<dbReference type="InterPro" id="IPR002588">
    <property type="entry name" value="Alphavirus-like_MT_dom"/>
</dbReference>
<dbReference type="InterPro" id="IPR002620">
    <property type="entry name" value="Alphavirus_nsp2pro"/>
</dbReference>
<dbReference type="InterPro" id="IPR044936">
    <property type="entry name" value="Alphavirus_nsp2pro_sf"/>
</dbReference>
<dbReference type="InterPro" id="IPR043502">
    <property type="entry name" value="DNA/RNA_pol_sf"/>
</dbReference>
<dbReference type="InterPro" id="IPR002589">
    <property type="entry name" value="Macro_dom"/>
</dbReference>
<dbReference type="InterPro" id="IPR043472">
    <property type="entry name" value="Macro_dom-like"/>
</dbReference>
<dbReference type="InterPro" id="IPR044371">
    <property type="entry name" value="Macro_X_NSP3-like"/>
</dbReference>
<dbReference type="InterPro" id="IPR048891">
    <property type="entry name" value="nsP3_ZBD"/>
</dbReference>
<dbReference type="InterPro" id="IPR027417">
    <property type="entry name" value="P-loop_NTPase"/>
</dbReference>
<dbReference type="InterPro" id="IPR001788">
    <property type="entry name" value="RNA-dep_RNA_pol_alsuvir"/>
</dbReference>
<dbReference type="InterPro" id="IPR007094">
    <property type="entry name" value="RNA-dir_pol_PSvirus"/>
</dbReference>
<dbReference type="InterPro" id="IPR029063">
    <property type="entry name" value="SAM-dependent_MTases_sf"/>
</dbReference>
<dbReference type="InterPro" id="IPR047311">
    <property type="entry name" value="Togaviridae_RdRp"/>
</dbReference>
<dbReference type="InterPro" id="IPR049329">
    <property type="entry name" value="ToMV_Hel_N"/>
</dbReference>
<dbReference type="Pfam" id="PF01661">
    <property type="entry name" value="Macro"/>
    <property type="match status" value="1"/>
</dbReference>
<dbReference type="Pfam" id="PF20852">
    <property type="entry name" value="nsP3_ZBD"/>
    <property type="match status" value="1"/>
</dbReference>
<dbReference type="Pfam" id="PF01707">
    <property type="entry name" value="Peptidase_C9"/>
    <property type="match status" value="1"/>
</dbReference>
<dbReference type="Pfam" id="PF00978">
    <property type="entry name" value="RdRP_2"/>
    <property type="match status" value="1"/>
</dbReference>
<dbReference type="Pfam" id="PF20896">
    <property type="entry name" value="ToMV_Hel_N"/>
    <property type="match status" value="1"/>
</dbReference>
<dbReference type="Pfam" id="PF01443">
    <property type="entry name" value="Viral_helicase1"/>
    <property type="match status" value="1"/>
</dbReference>
<dbReference type="Pfam" id="PF01660">
    <property type="entry name" value="Vmethyltransf"/>
    <property type="match status" value="1"/>
</dbReference>
<dbReference type="SMART" id="SM00506">
    <property type="entry name" value="A1pp"/>
    <property type="match status" value="1"/>
</dbReference>
<dbReference type="SUPFAM" id="SSF56672">
    <property type="entry name" value="DNA/RNA polymerases"/>
    <property type="match status" value="1"/>
</dbReference>
<dbReference type="SUPFAM" id="SSF52949">
    <property type="entry name" value="Macro domain-like"/>
    <property type="match status" value="1"/>
</dbReference>
<dbReference type="SUPFAM" id="SSF52540">
    <property type="entry name" value="P-loop containing nucleoside triphosphate hydrolases"/>
    <property type="match status" value="1"/>
</dbReference>
<dbReference type="PROSITE" id="PS51743">
    <property type="entry name" value="ALPHAVIRUS_MT"/>
    <property type="match status" value="1"/>
</dbReference>
<dbReference type="PROSITE" id="PS51154">
    <property type="entry name" value="MACRO"/>
    <property type="match status" value="1"/>
</dbReference>
<dbReference type="PROSITE" id="PS51520">
    <property type="entry name" value="NSP2PRO"/>
    <property type="match status" value="1"/>
</dbReference>
<dbReference type="PROSITE" id="PS51657">
    <property type="entry name" value="PSRV_HELICASE"/>
    <property type="match status" value="1"/>
</dbReference>
<dbReference type="PROSITE" id="PS50507">
    <property type="entry name" value="RDRP_SSRNA_POS"/>
    <property type="match status" value="1"/>
</dbReference>
<proteinExistence type="evidence at protein level"/>
<evidence type="ECO:0000250" key="1">
    <source>
        <dbReference type="UniProtKB" id="O90368"/>
    </source>
</evidence>
<evidence type="ECO:0000250" key="2">
    <source>
        <dbReference type="UniProtKB" id="P03317"/>
    </source>
</evidence>
<evidence type="ECO:0000250" key="3">
    <source>
        <dbReference type="UniProtKB" id="P27282"/>
    </source>
</evidence>
<evidence type="ECO:0000250" key="4">
    <source>
        <dbReference type="UniProtKB" id="Q8JUX6"/>
    </source>
</evidence>
<evidence type="ECO:0000255" key="5">
    <source>
        <dbReference type="PROSITE-ProRule" id="PRU00490"/>
    </source>
</evidence>
<evidence type="ECO:0000255" key="6">
    <source>
        <dbReference type="PROSITE-ProRule" id="PRU00539"/>
    </source>
</evidence>
<evidence type="ECO:0000255" key="7">
    <source>
        <dbReference type="PROSITE-ProRule" id="PRU00853"/>
    </source>
</evidence>
<evidence type="ECO:0000255" key="8">
    <source>
        <dbReference type="PROSITE-ProRule" id="PRU00990"/>
    </source>
</evidence>
<evidence type="ECO:0000255" key="9">
    <source>
        <dbReference type="PROSITE-ProRule" id="PRU01079"/>
    </source>
</evidence>
<evidence type="ECO:0000256" key="10">
    <source>
        <dbReference type="SAM" id="MobiDB-lite"/>
    </source>
</evidence>
<evidence type="ECO:0000269" key="11">
    <source>
    </source>
</evidence>
<evidence type="ECO:0000269" key="12">
    <source>
    </source>
</evidence>
<evidence type="ECO:0000269" key="13">
    <source>
    </source>
</evidence>
<evidence type="ECO:0000269" key="14">
    <source>
    </source>
</evidence>
<evidence type="ECO:0000269" key="15">
    <source>
    </source>
</evidence>
<evidence type="ECO:0000269" key="16">
    <source>
    </source>
</evidence>
<evidence type="ECO:0000269" key="17">
    <source>
    </source>
</evidence>
<evidence type="ECO:0000269" key="18">
    <source>
    </source>
</evidence>
<evidence type="ECO:0000269" key="19">
    <source>
    </source>
</evidence>
<evidence type="ECO:0000269" key="20">
    <source>
    </source>
</evidence>
<evidence type="ECO:0000269" key="21">
    <source>
    </source>
</evidence>
<evidence type="ECO:0000269" key="22">
    <source>
    </source>
</evidence>
<evidence type="ECO:0000269" key="23">
    <source>
    </source>
</evidence>
<evidence type="ECO:0000269" key="24">
    <source>
    </source>
</evidence>
<evidence type="ECO:0000269" key="25">
    <source>
    </source>
</evidence>
<evidence type="ECO:0000269" key="26">
    <source>
    </source>
</evidence>
<evidence type="ECO:0000269" key="27">
    <source>
    </source>
</evidence>
<evidence type="ECO:0000269" key="28">
    <source>
    </source>
</evidence>
<evidence type="ECO:0000269" key="29">
    <source>
    </source>
</evidence>
<evidence type="ECO:0000269" key="30">
    <source>
    </source>
</evidence>
<evidence type="ECO:0000269" key="31">
    <source>
    </source>
</evidence>
<evidence type="ECO:0000269" key="32">
    <source>
    </source>
</evidence>
<evidence type="ECO:0000269" key="33">
    <source>
    </source>
</evidence>
<evidence type="ECO:0000269" key="34">
    <source>
    </source>
</evidence>
<evidence type="ECO:0000269" key="35">
    <source>
    </source>
</evidence>
<evidence type="ECO:0000269" key="36">
    <source>
    </source>
</evidence>
<evidence type="ECO:0000269" key="37">
    <source>
    </source>
</evidence>
<evidence type="ECO:0000269" key="38">
    <source>
    </source>
</evidence>
<evidence type="ECO:0000269" key="39">
    <source>
    </source>
</evidence>
<evidence type="ECO:0000269" key="40">
    <source>
    </source>
</evidence>
<evidence type="ECO:0000303" key="41">
    <source>
    </source>
</evidence>
<evidence type="ECO:0000305" key="42"/>
<evidence type="ECO:0000305" key="43">
    <source>
    </source>
</evidence>
<evidence type="ECO:0000305" key="44">
    <source>
    </source>
</evidence>
<evidence type="ECO:0000305" key="45">
    <source>
    </source>
</evidence>
<evidence type="ECO:0000305" key="46">
    <source>
    </source>
</evidence>
<evidence type="ECO:0000305" key="47">
    <source>
    </source>
</evidence>
<evidence type="ECO:0000305" key="48">
    <source>
    </source>
</evidence>
<evidence type="ECO:0000305" key="49">
    <source>
    </source>
</evidence>
<evidence type="ECO:0000305" key="50">
    <source>
    </source>
</evidence>
<evidence type="ECO:0000305" key="51">
    <source>
    </source>
</evidence>
<evidence type="ECO:0000305" key="52">
    <source>
    </source>
</evidence>
<evidence type="ECO:0000305" key="53">
    <source>
    </source>
</evidence>
<evidence type="ECO:0007744" key="54">
    <source>
        <dbReference type="PDB" id="5DRV"/>
    </source>
</evidence>
<evidence type="ECO:0007744" key="55">
    <source>
        <dbReference type="PDB" id="5FW5"/>
    </source>
</evidence>
<evidence type="ECO:0007829" key="56">
    <source>
        <dbReference type="PDB" id="1FW5"/>
    </source>
</evidence>
<evidence type="ECO:0007829" key="57">
    <source>
        <dbReference type="PDB" id="5DRV"/>
    </source>
</evidence>
<evidence type="ECO:0007829" key="58">
    <source>
        <dbReference type="PDB" id="5FW5"/>
    </source>
</evidence>
<accession>P08411</accession>
<accession>B3TP00</accession>
<accession>Q3LRQ3</accession>
<accession>Q3LRQ4</accession>
<accession>Q3LRQ6</accession>
<accession>Q3LRQ7</accession>
<accession>Q3LRQ9</accession>
<accession>Q3LRR0</accession>
<accession>Q3LRR1</accession>
<accession>Q3LRR2</accession>
<accession>Q8JMP6</accession>
<accession>Q9QBM1</accession>
<protein>
    <recommendedName>
        <fullName>Polyprotein P1234</fullName>
        <shortName>P1234</shortName>
    </recommendedName>
    <alternativeName>
        <fullName>Non-structural polyprotein</fullName>
    </alternativeName>
    <component>
        <recommendedName>
            <fullName>Polyprotein P123'</fullName>
            <shortName>P123'</shortName>
        </recommendedName>
    </component>
    <component>
        <recommendedName>
            <fullName>Polyprotein P123</fullName>
            <shortName>P123</shortName>
        </recommendedName>
    </component>
    <component>
        <recommendedName>
            <fullName>mRNA-capping enzyme nsP1</fullName>
            <ecNumber evidence="3">2.1.1.-</ecNumber>
            <ecNumber evidence="3">2.7.7.-</ecNumber>
        </recommendedName>
        <alternativeName>
            <fullName>Non-structural protein 1</fullName>
        </alternativeName>
    </component>
    <component>
        <recommendedName>
            <fullName>Protease nsP2</fullName>
            <ecNumber evidence="4">3.4.22.-</ecNumber>
            <ecNumber evidence="37">3.6.1.15</ecNumber>
            <ecNumber evidence="12">3.6.1.74</ecNumber>
            <ecNumber evidence="11">3.6.4.13</ecNumber>
        </recommendedName>
        <alternativeName>
            <fullName>Non-structural protein 2</fullName>
            <shortName>nsP2</shortName>
        </alternativeName>
    </component>
    <component>
        <recommendedName>
            <fullName>Non-structural protein 3</fullName>
            <shortName>nsP3</shortName>
            <ecNumber evidence="4">3.1.3.84</ecNumber>
        </recommendedName>
    </component>
    <component>
        <recommendedName>
            <fullName>Non-structural protein 3'</fullName>
            <shortName>nsP3'</shortName>
            <ecNumber evidence="4">3.1.3.84</ecNumber>
        </recommendedName>
    </component>
    <component>
        <recommendedName>
            <fullName>RNA-directed RNA polymerase nsP4</fullName>
            <ecNumber evidence="2">2.7.7.19</ecNumber>
            <ecNumber evidence="6">2.7.7.48</ecNumber>
        </recommendedName>
        <alternativeName>
            <fullName>Non-structural protein 4</fullName>
            <shortName>nsP4</shortName>
        </alternativeName>
    </component>
</protein>
<keyword id="KW-0002">3D-structure</keyword>
<keyword id="KW-0067">ATP-binding</keyword>
<keyword id="KW-1262">Eukaryotic host gene expression shutoff by virus</keyword>
<keyword id="KW-1191">Eukaryotic host transcription shutoff by virus</keyword>
<keyword id="KW-0342">GTP-binding</keyword>
<keyword id="KW-0347">Helicase</keyword>
<keyword id="KW-1032">Host cell membrane</keyword>
<keyword id="KW-1034">Host cell projection</keyword>
<keyword id="KW-1035">Host cytoplasm</keyword>
<keyword id="KW-1036">Host cytoplasmic vesicle</keyword>
<keyword id="KW-1190">Host gene expression shutoff by virus</keyword>
<keyword id="KW-1043">Host membrane</keyword>
<keyword id="KW-1048">Host nucleus</keyword>
<keyword id="KW-0945">Host-virus interaction</keyword>
<keyword id="KW-0378">Hydrolase</keyword>
<keyword id="KW-1090">Inhibition of host innate immune response by virus</keyword>
<keyword id="KW-1114">Inhibition of host interferon signaling pathway by virus</keyword>
<keyword id="KW-1104">Inhibition of host RNA polymerase II by virus</keyword>
<keyword id="KW-1105">Inhibition of host STAT1 by virus</keyword>
<keyword id="KW-0922">Interferon antiviral system evasion</keyword>
<keyword id="KW-0449">Lipoprotein</keyword>
<keyword id="KW-0472">Membrane</keyword>
<keyword id="KW-0479">Metal-binding</keyword>
<keyword id="KW-0489">Methyltransferase</keyword>
<keyword id="KW-0506">mRNA capping</keyword>
<keyword id="KW-0507">mRNA processing</keyword>
<keyword id="KW-0511">Multifunctional enzyme</keyword>
<keyword id="KW-0547">Nucleotide-binding</keyword>
<keyword id="KW-0548">Nucleotidyltransferase</keyword>
<keyword id="KW-0564">Palmitate</keyword>
<keyword id="KW-0597">Phosphoprotein</keyword>
<keyword id="KW-0645">Protease</keyword>
<keyword id="KW-1185">Reference proteome</keyword>
<keyword id="KW-1159">RNA suppression of termination</keyword>
<keyword id="KW-0694">RNA-binding</keyword>
<keyword id="KW-0696">RNA-directed RNA polymerase</keyword>
<keyword id="KW-0949">S-adenosyl-L-methionine</keyword>
<keyword id="KW-0788">Thiol protease</keyword>
<keyword id="KW-0808">Transferase</keyword>
<keyword id="KW-0832">Ubl conjugation</keyword>
<keyword id="KW-0899">Viral immunoevasion</keyword>
<keyword id="KW-0693">Viral RNA replication</keyword>
<keyword id="KW-0862">Zinc</keyword>